<accession>P0DOY7</accession>
<accession>Q5SHP7</accession>
<name>RS17_THET8</name>
<reference key="1">
    <citation type="submission" date="2004-11" db="EMBL/GenBank/DDBJ databases">
        <title>Complete genome sequence of Thermus thermophilus HB8.</title>
        <authorList>
            <person name="Masui R."/>
            <person name="Kurokawa K."/>
            <person name="Nakagawa N."/>
            <person name="Tokunaga F."/>
            <person name="Koyama Y."/>
            <person name="Shibata T."/>
            <person name="Oshima T."/>
            <person name="Yokoyama S."/>
            <person name="Yasunaga T."/>
            <person name="Kuramitsu S."/>
        </authorList>
    </citation>
    <scope>NUCLEOTIDE SEQUENCE [LARGE SCALE GENOMIC DNA]</scope>
    <source>
        <strain>ATCC 27634 / DSM 579 / HB8</strain>
    </source>
</reference>
<reference key="2">
    <citation type="journal article" date="1994" name="Eur. J. Biochem.">
        <title>Purification and characterization of the 30S ribosomal proteins from the bacterium Thermus thermophilus.</title>
        <authorList>
            <person name="Tsiboli P."/>
            <person name="Herfurth E."/>
            <person name="Choli T."/>
        </authorList>
    </citation>
    <scope>PROTEIN SEQUENCE OF 2-14</scope>
</reference>
<reference key="3">
    <citation type="journal article" date="1999" name="Eur. J. Biochem.">
        <title>Ribosomal gene disruption in the extreme thermophile Thermus thermophilus HB8. Generation of a mutant lacking ribosomal protein S17.</title>
        <authorList>
            <person name="Simitsopoulou M."/>
            <person name="Avila H."/>
            <person name="Franceschi F."/>
        </authorList>
    </citation>
    <scope>DISRUPTION PHENOTYPE</scope>
</reference>
<reference key="4">
    <citation type="journal article" date="2005" name="Proteomics">
        <title>Extending ribosomal protein identifications to unsequenced bacterial strains using matrix-assisted laser desorption/ionization mass spectrometry.</title>
        <authorList>
            <person name="Suh M.-J."/>
            <person name="Hamburg D.M."/>
            <person name="Gregory S.T."/>
            <person name="Dahlberg A.E."/>
            <person name="Limbach P.A."/>
        </authorList>
    </citation>
    <scope>MASS SPECTROMETRY</scope>
    <source>
        <strain>ATCC 27634 / DSM 579 / HB8</strain>
    </source>
</reference>
<reference key="5">
    <citation type="journal article" date="1999" name="Nature">
        <title>Structure of a bacterial 30S ribosomal subunit at 5.5 A resolution.</title>
        <authorList>
            <person name="Clemons W.M. Jr."/>
            <person name="May J.L.C."/>
            <person name="Wimberly B.T."/>
            <person name="McCutcheon J.P."/>
            <person name="Capel M.S."/>
            <person name="Ramakrishnan V."/>
        </authorList>
    </citation>
    <scope>X-RAY CRYSTALLOGRAPHY (5.5 ANGSTROMS) OF THE 30S SUBUNIT</scope>
</reference>
<reference key="6">
    <citation type="journal article" date="2000" name="Nature">
        <title>Structure of the 30S ribosomal subunit.</title>
        <authorList>
            <person name="Wimberly B.T."/>
            <person name="Brodersen D.E."/>
            <person name="Clemons W.M. Jr."/>
            <person name="Morgan-Warren R.J."/>
            <person name="Carter A.P."/>
            <person name="Vonrhein C."/>
            <person name="Hartsch T."/>
            <person name="Ramakrishnan V."/>
        </authorList>
    </citation>
    <scope>X-RAY CRYSTALLOGRAPHY (3.05 ANGSTROMS) OF THE 30S SUBUNIT</scope>
</reference>
<reference key="7">
    <citation type="journal article" date="2000" name="Cell">
        <title>Structure of functionally activated small ribosomal subunit at 3.3 A resolution.</title>
        <authorList>
            <person name="Schluenzen F."/>
            <person name="Tocilj A."/>
            <person name="Zarivach R."/>
            <person name="Harms J."/>
            <person name="Gluehmann M."/>
            <person name="Janell D."/>
            <person name="Bashan A."/>
            <person name="Bartels H."/>
            <person name="Agmon I."/>
            <person name="Franceschi F."/>
            <person name="Yonath A."/>
        </authorList>
    </citation>
    <scope>X-RAY CRYSTALLOGRAPHY (3.3 ANGSTROMS) OF THE 30S SUBUNIT</scope>
</reference>
<reference key="8">
    <citation type="journal article" date="2000" name="Cell">
        <title>The structural basis for the action of the antibiotics tetracycline, pactamycin, and hygromycin B on the 30S ribosomal subunit.</title>
        <authorList>
            <person name="Brodersen D.E."/>
            <person name="Clemons W.M. Jr."/>
            <person name="Carter A.P."/>
            <person name="Morgan-Warren R.J."/>
            <person name="Wimberly B.T."/>
            <person name="Ramakrishnan V."/>
        </authorList>
    </citation>
    <scope>X-RAY CRYSTALLOGRAPHY (3.3 ANGSTROMS) OF THE 30S SUBUNIT</scope>
</reference>
<reference key="9">
    <citation type="journal article" date="2000" name="Nature">
        <title>Functional insights from the structure of the 30S ribosomal subunit and its interactions with antibiotics.</title>
        <authorList>
            <person name="Carter A.P."/>
            <person name="Clemons W.M. Jr."/>
            <person name="Brodersen D.E."/>
            <person name="Morgan-Warren R.J."/>
            <person name="Wimberly B.T."/>
            <person name="Ramakrishnan V."/>
        </authorList>
    </citation>
    <scope>X-RAY CRYSTALLOGRAPHY (3.0 ANGSTROMS) OF THE 30S SUBUNIT</scope>
</reference>
<reference key="10">
    <citation type="journal article" date="2001" name="Cell">
        <title>The path of messenger RNA through the ribosome.</title>
        <authorList>
            <person name="Yusupova G.Z."/>
            <person name="Yusupov M.M."/>
            <person name="Cate J.H.D."/>
            <person name="Noller H.F."/>
        </authorList>
    </citation>
    <scope>X-RAY CRYSTALLOGRAPHY (5.0 ANGSTROMS) OF THE RIBOSOME</scope>
</reference>
<reference key="11">
    <citation type="journal article" date="2001" name="EMBO J.">
        <title>Crystal structures of complexes of the small ribosomal subunit with tetracycline, edeine and IF3.</title>
        <authorList>
            <person name="Pioletti M."/>
            <person name="Schluenzen F."/>
            <person name="Harms J."/>
            <person name="Zarivach R."/>
            <person name="Gluehmann M."/>
            <person name="Avila H."/>
            <person name="Bashan A."/>
            <person name="Bartels H."/>
            <person name="Auerbach T."/>
            <person name="Jacobi C."/>
            <person name="Hartsch T."/>
            <person name="Yonath A."/>
            <person name="Franceschi F."/>
        </authorList>
    </citation>
    <scope>X-RAY CRYSTALLOGRAPHY (3.2 ANGSTROMS) OF THE 30S SUBUNIT</scope>
</reference>
<reference key="12">
    <citation type="journal article" date="2001" name="Science">
        <title>Crystal structure of an initiation factor bound to the 30S ribosomal subunit.</title>
        <authorList>
            <person name="Carter A.P."/>
            <person name="Clemons W.M. Jr."/>
            <person name="Brodersen D.E."/>
            <person name="Morgan-Warren R.J."/>
            <person name="Hartsch T."/>
            <person name="Wimberly B.T."/>
            <person name="Ramakrishnan V."/>
        </authorList>
    </citation>
    <scope>X-RAY CRYSTALLOGRAPHY (3.2 ANGSTROMS) OF THE 30S SUBUNIT</scope>
</reference>
<reference key="13">
    <citation type="journal article" date="2001" name="Science">
        <title>Crystal structure of the ribosome at 5.5 A resolution.</title>
        <authorList>
            <person name="Yusupov M.M."/>
            <person name="Yusupova G.Z."/>
            <person name="Baucom A."/>
            <person name="Lieberman K."/>
            <person name="Earnest T.N."/>
            <person name="Cate J.H.D."/>
            <person name="Noller H.F."/>
        </authorList>
    </citation>
    <scope>X-RAY CRYSTALLOGRAPHY (5.5 ANGSTROMS) OF THE RIBOSOME</scope>
</reference>
<reference key="14">
    <citation type="journal article" date="2001" name="Science">
        <title>Recognition of cognate transfer RNA by the 30S ribosomal subunit.</title>
        <authorList>
            <person name="Ogle J.M."/>
            <person name="Brodersen D.E."/>
            <person name="Clemons W.M. Jr."/>
            <person name="Tarry M.J."/>
            <person name="Carter A.P."/>
            <person name="Ramakrishnan V."/>
        </authorList>
    </citation>
    <scope>X-RAY CRYSTALLOGRAPHY (3.11 ANGSTROMS) OF THE 30S SUBUNIT</scope>
</reference>
<reference key="15">
    <citation type="journal article" date="2002" name="J. Mol. Biol.">
        <title>Crystal structure of the 30S ribosomal subunit from Thermus thermophilus: structure of the proteins and their interactions with 16S RNA.</title>
        <authorList>
            <person name="Brodersen D.E."/>
            <person name="Clemons W.M. Jr."/>
            <person name="Carter A.P."/>
            <person name="Wimberly B.T."/>
            <person name="Ramakrishnan V."/>
        </authorList>
    </citation>
    <scope>X-RAY CRYSTALLOGRAPHY (3.05 ANGSTROMS) OF THE 30S SUBUNIT</scope>
</reference>
<reference key="16">
    <citation type="journal article" date="2005" name="Cell">
        <title>Crystal structures of the ribosome in complex with release factors RF1 and RF2 bound to a cognate stop codon.</title>
        <authorList>
            <person name="Petry S."/>
            <person name="Brodersen D.E."/>
            <person name="Murphy F.V."/>
            <person name="Dunham C.M."/>
            <person name="Selmer M."/>
            <person name="Tarry M.J."/>
            <person name="Kelley A.C."/>
            <person name="Ramakrishnan V."/>
        </authorList>
    </citation>
    <scope>X-RAY CRYSTALLOGRAPHY (5.90 ANGSTROMS) OF 70S RIBOSOME IN COMPLEX WITH RF1 OR RF2</scope>
    <scope>SUBUNIT</scope>
</reference>
<reference key="17">
    <citation type="journal article" date="2008" name="Science">
        <title>Insights into translational termination from the structure of RF2 bound to the ribosome.</title>
        <authorList>
            <person name="Weixlbaumer A."/>
            <person name="Jin H."/>
            <person name="Neubauer C."/>
            <person name="Voorhees R.M."/>
            <person name="Petry S."/>
            <person name="Kelley A.C."/>
            <person name="Ramakrishnan V."/>
        </authorList>
    </citation>
    <scope>X-RAY CRYSTALLOGRAPHY (3.45 ANGSTROMS) OF 70S RIBOSOME IN COMPLEX WITH RF2</scope>
    <scope>SUBUNIT</scope>
</reference>
<reference key="18">
    <citation type="journal article" date="2010" name="Proc. Natl. Acad. Sci. U.S.A.">
        <title>Structure of the 70S ribosome bound to release factor 2 and a substrate analog provides insights into catalysis of peptide release.</title>
        <authorList>
            <person name="Jin H."/>
            <person name="Kelley A.C."/>
            <person name="Loakes D."/>
            <person name="Ramakrishnan V."/>
        </authorList>
    </citation>
    <scope>X-RAY CRYSTALLOGRAPHY (3.10 ANGSTROMS) OF 70S RIBOSOME IN COMPLEX WITH RF2</scope>
    <scope>SUBUNIT</scope>
</reference>
<organism>
    <name type="scientific">Thermus thermophilus (strain ATCC 27634 / DSM 579 / HB8)</name>
    <dbReference type="NCBI Taxonomy" id="300852"/>
    <lineage>
        <taxon>Bacteria</taxon>
        <taxon>Thermotogati</taxon>
        <taxon>Deinococcota</taxon>
        <taxon>Deinococci</taxon>
        <taxon>Thermales</taxon>
        <taxon>Thermaceae</taxon>
        <taxon>Thermus</taxon>
    </lineage>
</organism>
<sequence length="105" mass="12298">MPKKVLTGVVVSDKMQKTVTVLVERQFPHPLYGKVIKRSKKYLAHDPEEKYKLGDVVEIIESRPISKRKRFRVLRLVESGRMDLVEKYLIRRQNYESLSKRGGKA</sequence>
<proteinExistence type="evidence at protein level"/>
<evidence type="ECO:0000255" key="1">
    <source>
        <dbReference type="HAMAP-Rule" id="MF_01345"/>
    </source>
</evidence>
<evidence type="ECO:0000269" key="2">
    <source>
    </source>
</evidence>
<evidence type="ECO:0000269" key="3">
    <source>
    </source>
</evidence>
<evidence type="ECO:0000269" key="4">
    <source>
    </source>
</evidence>
<evidence type="ECO:0000305" key="5"/>
<evidence type="ECO:0007829" key="6">
    <source>
        <dbReference type="PDB" id="2E5L"/>
    </source>
</evidence>
<evidence type="ECO:0007829" key="7">
    <source>
        <dbReference type="PDB" id="2UUB"/>
    </source>
</evidence>
<evidence type="ECO:0007829" key="8">
    <source>
        <dbReference type="PDB" id="3T1Y"/>
    </source>
</evidence>
<feature type="initiator methionine" description="Removed" evidence="4">
    <location>
        <position position="1"/>
    </location>
</feature>
<feature type="chain" id="PRO_0000128492" description="Small ribosomal subunit protein uS17">
    <location>
        <begin position="2"/>
        <end position="105"/>
    </location>
</feature>
<feature type="strand" evidence="7">
    <location>
        <begin position="5"/>
        <end position="10"/>
    </location>
</feature>
<feature type="strand" evidence="6">
    <location>
        <begin position="15"/>
        <end position="17"/>
    </location>
</feature>
<feature type="strand" evidence="7">
    <location>
        <begin position="18"/>
        <end position="29"/>
    </location>
</feature>
<feature type="turn" evidence="7">
    <location>
        <begin position="30"/>
        <end position="32"/>
    </location>
</feature>
<feature type="strand" evidence="7">
    <location>
        <begin position="33"/>
        <end position="45"/>
    </location>
</feature>
<feature type="strand" evidence="6">
    <location>
        <begin position="47"/>
        <end position="49"/>
    </location>
</feature>
<feature type="strand" evidence="7">
    <location>
        <begin position="56"/>
        <end position="66"/>
    </location>
</feature>
<feature type="strand" evidence="7">
    <location>
        <begin position="69"/>
        <end position="78"/>
    </location>
</feature>
<feature type="helix" evidence="7">
    <location>
        <begin position="82"/>
        <end position="95"/>
    </location>
</feature>
<feature type="strand" evidence="8">
    <location>
        <begin position="98"/>
        <end position="101"/>
    </location>
</feature>
<gene>
    <name evidence="1" type="primary">rpsQ</name>
    <name type="ordered locus">TTHA1683</name>
</gene>
<comment type="function">
    <text>One of the primary rRNA binding proteins, it binds directly to 16S rRNA where it helps nucleate assembly of the platform and body of the 30S subunit by bringing together and stabilizing interactions between several different RNA helices. The combined cluster of proteins S8, S12 and S17 appears to hold together the shoulder and platform of the 30S subunit.</text>
</comment>
<comment type="subunit">
    <text>Part of the 30S ribosomal subunit. Contacts protein S12.</text>
</comment>
<comment type="mass spectrometry" mass="12167.0" method="MALDI" evidence="3"/>
<comment type="disruption phenotype">
    <text evidence="2">Increased generation time and a temperature-sensitive phenotype.</text>
</comment>
<comment type="similarity">
    <text evidence="1">Belongs to the universal ribosomal protein uS17 family.</text>
</comment>
<dbReference type="EMBL" id="AP008226">
    <property type="protein sequence ID" value="BAD71506.1"/>
    <property type="molecule type" value="Genomic_DNA"/>
</dbReference>
<dbReference type="RefSeq" id="WP_011228845.1">
    <property type="nucleotide sequence ID" value="NC_006461.1"/>
</dbReference>
<dbReference type="RefSeq" id="YP_144949.1">
    <property type="nucleotide sequence ID" value="NC_006461.1"/>
</dbReference>
<dbReference type="PDB" id="1FJG">
    <property type="method" value="X-ray"/>
    <property type="resolution" value="3.00 A"/>
    <property type="chains" value="Q=1-105"/>
</dbReference>
<dbReference type="PDB" id="1HNW">
    <property type="method" value="X-ray"/>
    <property type="resolution" value="3.40 A"/>
    <property type="chains" value="Q=1-105"/>
</dbReference>
<dbReference type="PDB" id="1HNX">
    <property type="method" value="X-ray"/>
    <property type="resolution" value="3.40 A"/>
    <property type="chains" value="Q=1-105"/>
</dbReference>
<dbReference type="PDB" id="1HNZ">
    <property type="method" value="X-ray"/>
    <property type="resolution" value="3.30 A"/>
    <property type="chains" value="Q=1-105"/>
</dbReference>
<dbReference type="PDB" id="1HR0">
    <property type="method" value="X-ray"/>
    <property type="resolution" value="3.20 A"/>
    <property type="chains" value="Q=1-105"/>
</dbReference>
<dbReference type="PDB" id="1I94">
    <property type="method" value="X-ray"/>
    <property type="resolution" value="3.20 A"/>
    <property type="chains" value="Q=2-105"/>
</dbReference>
<dbReference type="PDB" id="1I95">
    <property type="method" value="X-ray"/>
    <property type="resolution" value="4.50 A"/>
    <property type="chains" value="Q=2-105"/>
</dbReference>
<dbReference type="PDB" id="1I96">
    <property type="method" value="X-ray"/>
    <property type="resolution" value="4.20 A"/>
    <property type="chains" value="Q=2-105"/>
</dbReference>
<dbReference type="PDB" id="1I97">
    <property type="method" value="X-ray"/>
    <property type="resolution" value="4.50 A"/>
    <property type="chains" value="Q=2-105"/>
</dbReference>
<dbReference type="PDB" id="1IBK">
    <property type="method" value="X-ray"/>
    <property type="resolution" value="3.31 A"/>
    <property type="chains" value="Q=1-105"/>
</dbReference>
<dbReference type="PDB" id="1IBL">
    <property type="method" value="X-ray"/>
    <property type="resolution" value="3.11 A"/>
    <property type="chains" value="Q=1-105"/>
</dbReference>
<dbReference type="PDB" id="1IBM">
    <property type="method" value="X-ray"/>
    <property type="resolution" value="3.31 A"/>
    <property type="chains" value="Q=1-105"/>
</dbReference>
<dbReference type="PDB" id="1J5E">
    <property type="method" value="X-ray"/>
    <property type="resolution" value="3.05 A"/>
    <property type="chains" value="Q=2-105"/>
</dbReference>
<dbReference type="PDB" id="1JGO">
    <property type="method" value="X-ray"/>
    <property type="resolution" value="5.60 A"/>
    <property type="chains" value="T=1-105"/>
</dbReference>
<dbReference type="PDB" id="1JGP">
    <property type="method" value="X-ray"/>
    <property type="resolution" value="7.00 A"/>
    <property type="chains" value="T=1-105"/>
</dbReference>
<dbReference type="PDB" id="1JGQ">
    <property type="method" value="X-ray"/>
    <property type="resolution" value="5.00 A"/>
    <property type="chains" value="T=1-105"/>
</dbReference>
<dbReference type="PDB" id="1ML5">
    <property type="method" value="EM"/>
    <property type="resolution" value="14.00 A"/>
    <property type="chains" value="T=1-105"/>
</dbReference>
<dbReference type="PDB" id="1N32">
    <property type="method" value="X-ray"/>
    <property type="resolution" value="3.00 A"/>
    <property type="chains" value="Q=2-105"/>
</dbReference>
<dbReference type="PDB" id="1N33">
    <property type="method" value="X-ray"/>
    <property type="resolution" value="3.35 A"/>
    <property type="chains" value="Q=2-105"/>
</dbReference>
<dbReference type="PDB" id="1N34">
    <property type="method" value="X-ray"/>
    <property type="resolution" value="3.80 A"/>
    <property type="chains" value="Q=2-105"/>
</dbReference>
<dbReference type="PDB" id="1N36">
    <property type="method" value="X-ray"/>
    <property type="resolution" value="3.65 A"/>
    <property type="chains" value="Q=2-105"/>
</dbReference>
<dbReference type="PDB" id="1VVJ">
    <property type="method" value="X-ray"/>
    <property type="resolution" value="3.44 A"/>
    <property type="chains" value="QQ/XQ=1-105"/>
</dbReference>
<dbReference type="PDB" id="1VY4">
    <property type="method" value="X-ray"/>
    <property type="resolution" value="2.60 A"/>
    <property type="chains" value="AQ/CQ=1-105"/>
</dbReference>
<dbReference type="PDB" id="1VY5">
    <property type="method" value="X-ray"/>
    <property type="resolution" value="2.55 A"/>
    <property type="chains" value="AQ/CQ=1-105"/>
</dbReference>
<dbReference type="PDB" id="1VY6">
    <property type="method" value="X-ray"/>
    <property type="resolution" value="2.90 A"/>
    <property type="chains" value="AQ/CQ=1-105"/>
</dbReference>
<dbReference type="PDB" id="1VY7">
    <property type="method" value="X-ray"/>
    <property type="resolution" value="2.80 A"/>
    <property type="chains" value="AQ/CQ=1-105"/>
</dbReference>
<dbReference type="PDB" id="1XMO">
    <property type="method" value="X-ray"/>
    <property type="resolution" value="3.25 A"/>
    <property type="chains" value="Q=1-105"/>
</dbReference>
<dbReference type="PDB" id="1XMQ">
    <property type="method" value="X-ray"/>
    <property type="resolution" value="3.00 A"/>
    <property type="chains" value="Q=1-105"/>
</dbReference>
<dbReference type="PDB" id="1XNQ">
    <property type="method" value="X-ray"/>
    <property type="resolution" value="3.05 A"/>
    <property type="chains" value="Q=1-105"/>
</dbReference>
<dbReference type="PDB" id="1XNR">
    <property type="method" value="X-ray"/>
    <property type="resolution" value="3.10 A"/>
    <property type="chains" value="Q=1-105"/>
</dbReference>
<dbReference type="PDB" id="2E5L">
    <property type="method" value="X-ray"/>
    <property type="resolution" value="3.30 A"/>
    <property type="chains" value="Q=2-105"/>
</dbReference>
<dbReference type="PDB" id="2F4V">
    <property type="method" value="X-ray"/>
    <property type="resolution" value="3.80 A"/>
    <property type="chains" value="Q=1-105"/>
</dbReference>
<dbReference type="PDB" id="2HHH">
    <property type="method" value="X-ray"/>
    <property type="resolution" value="3.35 A"/>
    <property type="chains" value="Q=1-105"/>
</dbReference>
<dbReference type="PDB" id="2UU9">
    <property type="method" value="X-ray"/>
    <property type="resolution" value="3.10 A"/>
    <property type="chains" value="Q=2-105"/>
</dbReference>
<dbReference type="PDB" id="2UUA">
    <property type="method" value="X-ray"/>
    <property type="resolution" value="2.90 A"/>
    <property type="chains" value="Q=2-105"/>
</dbReference>
<dbReference type="PDB" id="2UUB">
    <property type="method" value="X-ray"/>
    <property type="resolution" value="2.80 A"/>
    <property type="chains" value="Q=2-105"/>
</dbReference>
<dbReference type="PDB" id="2UUC">
    <property type="method" value="X-ray"/>
    <property type="resolution" value="3.10 A"/>
    <property type="chains" value="Q=2-105"/>
</dbReference>
<dbReference type="PDB" id="2UXB">
    <property type="method" value="X-ray"/>
    <property type="resolution" value="3.10 A"/>
    <property type="chains" value="Q=2-105"/>
</dbReference>
<dbReference type="PDB" id="2UXC">
    <property type="method" value="X-ray"/>
    <property type="resolution" value="2.90 A"/>
    <property type="chains" value="Q=2-105"/>
</dbReference>
<dbReference type="PDB" id="2UXD">
    <property type="method" value="X-ray"/>
    <property type="resolution" value="3.20 A"/>
    <property type="chains" value="Q=2-105"/>
</dbReference>
<dbReference type="PDB" id="2ZM6">
    <property type="method" value="X-ray"/>
    <property type="resolution" value="3.30 A"/>
    <property type="chains" value="Q=2-105"/>
</dbReference>
<dbReference type="PDB" id="3OTO">
    <property type="method" value="X-ray"/>
    <property type="resolution" value="3.69 A"/>
    <property type="chains" value="Q=1-105"/>
</dbReference>
<dbReference type="PDB" id="3T1H">
    <property type="method" value="X-ray"/>
    <property type="resolution" value="3.11 A"/>
    <property type="chains" value="Q=1-105"/>
</dbReference>
<dbReference type="PDB" id="3T1Y">
    <property type="method" value="X-ray"/>
    <property type="resolution" value="2.80 A"/>
    <property type="chains" value="Q=1-105"/>
</dbReference>
<dbReference type="PDB" id="4AQY">
    <property type="method" value="X-ray"/>
    <property type="resolution" value="3.50 A"/>
    <property type="chains" value="Q=2-105"/>
</dbReference>
<dbReference type="PDB" id="4B3M">
    <property type="method" value="X-ray"/>
    <property type="resolution" value="2.90 A"/>
    <property type="chains" value="Q=2-105"/>
</dbReference>
<dbReference type="PDB" id="4B3R">
    <property type="method" value="X-ray"/>
    <property type="resolution" value="3.00 A"/>
    <property type="chains" value="Q=2-105"/>
</dbReference>
<dbReference type="PDB" id="4B3S">
    <property type="method" value="X-ray"/>
    <property type="resolution" value="3.15 A"/>
    <property type="chains" value="Q=2-105"/>
</dbReference>
<dbReference type="PDB" id="4B3T">
    <property type="method" value="X-ray"/>
    <property type="resolution" value="3.00 A"/>
    <property type="chains" value="Q=2-105"/>
</dbReference>
<dbReference type="PDB" id="4DR1">
    <property type="method" value="X-ray"/>
    <property type="resolution" value="3.60 A"/>
    <property type="chains" value="Q=1-105"/>
</dbReference>
<dbReference type="PDB" id="4DR2">
    <property type="method" value="X-ray"/>
    <property type="resolution" value="3.25 A"/>
    <property type="chains" value="Q=1-105"/>
</dbReference>
<dbReference type="PDB" id="4DR3">
    <property type="method" value="X-ray"/>
    <property type="resolution" value="3.35 A"/>
    <property type="chains" value="Q=1-105"/>
</dbReference>
<dbReference type="PDB" id="4DR4">
    <property type="method" value="X-ray"/>
    <property type="resolution" value="3.97 A"/>
    <property type="chains" value="Q=1-105"/>
</dbReference>
<dbReference type="PDB" id="4DR5">
    <property type="method" value="X-ray"/>
    <property type="resolution" value="3.45 A"/>
    <property type="chains" value="Q=1-105"/>
</dbReference>
<dbReference type="PDB" id="4DR6">
    <property type="method" value="X-ray"/>
    <property type="resolution" value="3.30 A"/>
    <property type="chains" value="Q=1-105"/>
</dbReference>
<dbReference type="PDB" id="4DR7">
    <property type="method" value="X-ray"/>
    <property type="resolution" value="3.75 A"/>
    <property type="chains" value="Q=1-105"/>
</dbReference>
<dbReference type="PDB" id="4DUY">
    <property type="method" value="X-ray"/>
    <property type="resolution" value="3.39 A"/>
    <property type="chains" value="Q=1-105"/>
</dbReference>
<dbReference type="PDB" id="4DUZ">
    <property type="method" value="X-ray"/>
    <property type="resolution" value="3.65 A"/>
    <property type="chains" value="Q=1-105"/>
</dbReference>
<dbReference type="PDB" id="4DV0">
    <property type="method" value="X-ray"/>
    <property type="resolution" value="3.85 A"/>
    <property type="chains" value="Q=1-105"/>
</dbReference>
<dbReference type="PDB" id="4DV1">
    <property type="method" value="X-ray"/>
    <property type="resolution" value="3.85 A"/>
    <property type="chains" value="Q=1-105"/>
</dbReference>
<dbReference type="PDB" id="4DV2">
    <property type="method" value="X-ray"/>
    <property type="resolution" value="3.65 A"/>
    <property type="chains" value="Q=1-105"/>
</dbReference>
<dbReference type="PDB" id="4DV3">
    <property type="method" value="X-ray"/>
    <property type="resolution" value="3.55 A"/>
    <property type="chains" value="Q=1-105"/>
</dbReference>
<dbReference type="PDB" id="4DV4">
    <property type="method" value="X-ray"/>
    <property type="resolution" value="3.65 A"/>
    <property type="chains" value="Q=1-105"/>
</dbReference>
<dbReference type="PDB" id="4DV5">
    <property type="method" value="X-ray"/>
    <property type="resolution" value="3.68 A"/>
    <property type="chains" value="Q=1-105"/>
</dbReference>
<dbReference type="PDB" id="4DV6">
    <property type="method" value="X-ray"/>
    <property type="resolution" value="3.30 A"/>
    <property type="chains" value="Q=1-105"/>
</dbReference>
<dbReference type="PDB" id="4DV7">
    <property type="method" value="X-ray"/>
    <property type="resolution" value="3.29 A"/>
    <property type="chains" value="Q=1-105"/>
</dbReference>
<dbReference type="PDB" id="4GKJ">
    <property type="method" value="X-ray"/>
    <property type="resolution" value="3.30 A"/>
    <property type="chains" value="Q=2-105"/>
</dbReference>
<dbReference type="PDB" id="4GKK">
    <property type="method" value="X-ray"/>
    <property type="resolution" value="3.20 A"/>
    <property type="chains" value="Q=2-105"/>
</dbReference>
<dbReference type="PDB" id="4JI0">
    <property type="method" value="X-ray"/>
    <property type="resolution" value="3.49 A"/>
    <property type="chains" value="Q=1-105"/>
</dbReference>
<dbReference type="PDB" id="4JI1">
    <property type="method" value="X-ray"/>
    <property type="resolution" value="3.14 A"/>
    <property type="chains" value="Q=1-105"/>
</dbReference>
<dbReference type="PDB" id="4JI2">
    <property type="method" value="X-ray"/>
    <property type="resolution" value="3.64 A"/>
    <property type="chains" value="Q=1-105"/>
</dbReference>
<dbReference type="PDB" id="4JI3">
    <property type="method" value="X-ray"/>
    <property type="resolution" value="3.35 A"/>
    <property type="chains" value="Q=1-105"/>
</dbReference>
<dbReference type="PDB" id="4JI4">
    <property type="method" value="X-ray"/>
    <property type="resolution" value="3.69 A"/>
    <property type="chains" value="Q=1-105"/>
</dbReference>
<dbReference type="PDB" id="4JI5">
    <property type="method" value="X-ray"/>
    <property type="resolution" value="3.85 A"/>
    <property type="chains" value="Q=1-105"/>
</dbReference>
<dbReference type="PDB" id="4JI6">
    <property type="method" value="X-ray"/>
    <property type="resolution" value="3.55 A"/>
    <property type="chains" value="Q=1-105"/>
</dbReference>
<dbReference type="PDB" id="4JI7">
    <property type="method" value="X-ray"/>
    <property type="resolution" value="3.50 A"/>
    <property type="chains" value="Q=1-105"/>
</dbReference>
<dbReference type="PDB" id="4JI8">
    <property type="method" value="X-ray"/>
    <property type="resolution" value="3.74 A"/>
    <property type="chains" value="Q=1-105"/>
</dbReference>
<dbReference type="PDB" id="4JV5">
    <property type="method" value="X-ray"/>
    <property type="resolution" value="3.16 A"/>
    <property type="chains" value="Q=2-100"/>
</dbReference>
<dbReference type="PDB" id="4JYA">
    <property type="method" value="X-ray"/>
    <property type="resolution" value="3.10 A"/>
    <property type="chains" value="Q=2-100"/>
</dbReference>
<dbReference type="PDB" id="4K0K">
    <property type="method" value="X-ray"/>
    <property type="resolution" value="3.40 A"/>
    <property type="chains" value="Q=2-101"/>
</dbReference>
<dbReference type="PDB" id="4KHP">
    <property type="method" value="X-ray"/>
    <property type="resolution" value="3.10 A"/>
    <property type="chains" value="Q=2-100"/>
</dbReference>
<dbReference type="PDB" id="4L47">
    <property type="method" value="X-ray"/>
    <property type="resolution" value="3.22 A"/>
    <property type="chains" value="QQ/XQ=1-105"/>
</dbReference>
<dbReference type="PDB" id="4L71">
    <property type="method" value="X-ray"/>
    <property type="resolution" value="3.90 A"/>
    <property type="chains" value="QQ/XQ=1-105"/>
</dbReference>
<dbReference type="PDB" id="4LEL">
    <property type="method" value="X-ray"/>
    <property type="resolution" value="3.90 A"/>
    <property type="chains" value="QQ/XQ=1-105"/>
</dbReference>
<dbReference type="PDB" id="4LF4">
    <property type="method" value="X-ray"/>
    <property type="resolution" value="3.34 A"/>
    <property type="chains" value="Q=1-105"/>
</dbReference>
<dbReference type="PDB" id="4LF5">
    <property type="method" value="X-ray"/>
    <property type="resolution" value="3.75 A"/>
    <property type="chains" value="Q=1-105"/>
</dbReference>
<dbReference type="PDB" id="4LF6">
    <property type="method" value="X-ray"/>
    <property type="resolution" value="3.31 A"/>
    <property type="chains" value="Q=1-105"/>
</dbReference>
<dbReference type="PDB" id="4LF7">
    <property type="method" value="X-ray"/>
    <property type="resolution" value="3.15 A"/>
    <property type="chains" value="Q=1-105"/>
</dbReference>
<dbReference type="PDB" id="4LF8">
    <property type="method" value="X-ray"/>
    <property type="resolution" value="3.15 A"/>
    <property type="chains" value="Q=1-105"/>
</dbReference>
<dbReference type="PDB" id="4LF9">
    <property type="method" value="X-ray"/>
    <property type="resolution" value="3.28 A"/>
    <property type="chains" value="Q=1-105"/>
</dbReference>
<dbReference type="PDB" id="4LFA">
    <property type="method" value="X-ray"/>
    <property type="resolution" value="3.65 A"/>
    <property type="chains" value="Q=1-105"/>
</dbReference>
<dbReference type="PDB" id="4LFB">
    <property type="method" value="X-ray"/>
    <property type="resolution" value="3.01 A"/>
    <property type="chains" value="Q=1-105"/>
</dbReference>
<dbReference type="PDB" id="4LFC">
    <property type="method" value="X-ray"/>
    <property type="resolution" value="3.60 A"/>
    <property type="chains" value="Q=1-105"/>
</dbReference>
<dbReference type="PDB" id="4LFZ">
    <property type="method" value="X-ray"/>
    <property type="resolution" value="3.92 A"/>
    <property type="chains" value="QQ/XQ=1-105"/>
</dbReference>
<dbReference type="PDB" id="4LNT">
    <property type="method" value="X-ray"/>
    <property type="resolution" value="2.94 A"/>
    <property type="chains" value="QQ/XQ=1-105"/>
</dbReference>
<dbReference type="PDB" id="4LSK">
    <property type="method" value="X-ray"/>
    <property type="resolution" value="3.48 A"/>
    <property type="chains" value="QQ/XQ=1-105"/>
</dbReference>
<dbReference type="PDB" id="4LT8">
    <property type="method" value="X-ray"/>
    <property type="resolution" value="3.14 A"/>
    <property type="chains" value="QQ/XQ=1-105"/>
</dbReference>
<dbReference type="PDB" id="4NXM">
    <property type="method" value="X-ray"/>
    <property type="resolution" value="3.65 A"/>
    <property type="chains" value="Q=1-105"/>
</dbReference>
<dbReference type="PDB" id="4NXN">
    <property type="method" value="X-ray"/>
    <property type="resolution" value="3.54 A"/>
    <property type="chains" value="Q=1-105"/>
</dbReference>
<dbReference type="PDB" id="4OX9">
    <property type="method" value="X-ray"/>
    <property type="resolution" value="3.80 A"/>
    <property type="chains" value="Q=2-105"/>
</dbReference>
<dbReference type="PDB" id="4P6F">
    <property type="method" value="X-ray"/>
    <property type="resolution" value="3.60 A"/>
    <property type="chains" value="QQ/XQ=1-105"/>
</dbReference>
<dbReference type="PDB" id="4P70">
    <property type="method" value="X-ray"/>
    <property type="resolution" value="3.68 A"/>
    <property type="chains" value="QQ/XQ=1-105"/>
</dbReference>
<dbReference type="PDB" id="4TUA">
    <property type="method" value="X-ray"/>
    <property type="resolution" value="3.60 A"/>
    <property type="chains" value="QQ/XQ=1-105"/>
</dbReference>
<dbReference type="PDB" id="4TUB">
    <property type="method" value="X-ray"/>
    <property type="resolution" value="3.60 A"/>
    <property type="chains" value="QQ/XQ=1-105"/>
</dbReference>
<dbReference type="PDB" id="4TUC">
    <property type="method" value="X-ray"/>
    <property type="resolution" value="3.60 A"/>
    <property type="chains" value="QQ/XQ=1-105"/>
</dbReference>
<dbReference type="PDB" id="4TUD">
    <property type="method" value="X-ray"/>
    <property type="resolution" value="3.60 A"/>
    <property type="chains" value="QQ/XQ=1-105"/>
</dbReference>
<dbReference type="PDB" id="4TUE">
    <property type="method" value="X-ray"/>
    <property type="resolution" value="3.50 A"/>
    <property type="chains" value="QQ/XQ=1-105"/>
</dbReference>
<dbReference type="PDB" id="4V42">
    <property type="method" value="X-ray"/>
    <property type="resolution" value="5.50 A"/>
    <property type="chains" value="T=1-105"/>
</dbReference>
<dbReference type="PDB" id="4V49">
    <property type="method" value="X-ray"/>
    <property type="resolution" value="8.70 A"/>
    <property type="chains" value="Q=2-105"/>
</dbReference>
<dbReference type="PDB" id="4V4G">
    <property type="method" value="X-ray"/>
    <property type="resolution" value="11.50 A"/>
    <property type="chains" value="Q=2-105"/>
</dbReference>
<dbReference type="PDB" id="4V4I">
    <property type="method" value="X-ray"/>
    <property type="resolution" value="3.71 A"/>
    <property type="chains" value="r=1-105"/>
</dbReference>
<dbReference type="PDB" id="4V4P">
    <property type="method" value="X-ray"/>
    <property type="resolution" value="5.50 A"/>
    <property type="chains" value="BT=1-105"/>
</dbReference>
<dbReference type="PDB" id="4V4R">
    <property type="method" value="X-ray"/>
    <property type="resolution" value="5.90 A"/>
    <property type="chains" value="AQ=1-105"/>
</dbReference>
<dbReference type="PDB" id="4V4S">
    <property type="method" value="X-ray"/>
    <property type="resolution" value="6.76 A"/>
    <property type="chains" value="AQ=1-105"/>
</dbReference>
<dbReference type="PDB" id="4V4T">
    <property type="method" value="X-ray"/>
    <property type="resolution" value="6.46 A"/>
    <property type="chains" value="AQ=1-105"/>
</dbReference>
<dbReference type="PDB" id="4V4X">
    <property type="method" value="X-ray"/>
    <property type="resolution" value="5.00 A"/>
    <property type="chains" value="AT=1-105"/>
</dbReference>
<dbReference type="PDB" id="4V4Y">
    <property type="method" value="X-ray"/>
    <property type="resolution" value="5.50 A"/>
    <property type="chains" value="AT=1-105"/>
</dbReference>
<dbReference type="PDB" id="4V4Z">
    <property type="method" value="X-ray"/>
    <property type="resolution" value="4.51 A"/>
    <property type="chains" value="AT=1-105"/>
</dbReference>
<dbReference type="PDB" id="4V51">
    <property type="method" value="X-ray"/>
    <property type="resolution" value="2.80 A"/>
    <property type="chains" value="AQ/CQ=2-105"/>
</dbReference>
<dbReference type="PDB" id="4V5A">
    <property type="method" value="X-ray"/>
    <property type="resolution" value="3.50 A"/>
    <property type="chains" value="AQ/CQ=2-105"/>
</dbReference>
<dbReference type="PDB" id="4V5C">
    <property type="method" value="X-ray"/>
    <property type="resolution" value="3.30 A"/>
    <property type="chains" value="AQ/CQ=1-105"/>
</dbReference>
<dbReference type="PDB" id="4V5D">
    <property type="method" value="X-ray"/>
    <property type="resolution" value="3.50 A"/>
    <property type="chains" value="AQ/CQ=1-105"/>
</dbReference>
<dbReference type="PDB" id="4V5E">
    <property type="method" value="X-ray"/>
    <property type="resolution" value="3.45 A"/>
    <property type="chains" value="AQ/CQ=1-105"/>
</dbReference>
<dbReference type="PDB" id="4V5F">
    <property type="method" value="X-ray"/>
    <property type="resolution" value="3.60 A"/>
    <property type="chains" value="AQ/CQ=1-105"/>
</dbReference>
<dbReference type="PDB" id="4V5G">
    <property type="method" value="X-ray"/>
    <property type="resolution" value="3.60 A"/>
    <property type="chains" value="AQ/CQ=1-105"/>
</dbReference>
<dbReference type="PDB" id="4V5J">
    <property type="method" value="X-ray"/>
    <property type="resolution" value="3.10 A"/>
    <property type="chains" value="AQ/CQ=1-105"/>
</dbReference>
<dbReference type="PDB" id="4V5K">
    <property type="method" value="X-ray"/>
    <property type="resolution" value="3.20 A"/>
    <property type="chains" value="AQ/CQ=1-105"/>
</dbReference>
<dbReference type="PDB" id="4V5L">
    <property type="method" value="X-ray"/>
    <property type="resolution" value="3.10 A"/>
    <property type="chains" value="AQ=1-105"/>
</dbReference>
<dbReference type="PDB" id="4V5M">
    <property type="method" value="EM"/>
    <property type="resolution" value="7.80 A"/>
    <property type="chains" value="AQ=1-105"/>
</dbReference>
<dbReference type="PDB" id="4V5N">
    <property type="method" value="EM"/>
    <property type="resolution" value="7.60 A"/>
    <property type="chains" value="AQ=1-105"/>
</dbReference>
<dbReference type="PDB" id="4V5P">
    <property type="method" value="X-ray"/>
    <property type="resolution" value="3.10 A"/>
    <property type="chains" value="AQ/CQ=1-105"/>
</dbReference>
<dbReference type="PDB" id="4V5Q">
    <property type="method" value="X-ray"/>
    <property type="resolution" value="3.10 A"/>
    <property type="chains" value="AQ/CQ=1-105"/>
</dbReference>
<dbReference type="PDB" id="4V5R">
    <property type="method" value="X-ray"/>
    <property type="resolution" value="3.10 A"/>
    <property type="chains" value="AQ/CQ=1-105"/>
</dbReference>
<dbReference type="PDB" id="4V5S">
    <property type="method" value="X-ray"/>
    <property type="resolution" value="3.10 A"/>
    <property type="chains" value="AQ/CQ=1-105"/>
</dbReference>
<dbReference type="PDB" id="4V68">
    <property type="method" value="EM"/>
    <property type="resolution" value="6.40 A"/>
    <property type="chains" value="AQ=2-101"/>
</dbReference>
<dbReference type="PDB" id="4V6A">
    <property type="method" value="X-ray"/>
    <property type="resolution" value="3.10 A"/>
    <property type="chains" value="AQ/CQ=1-105"/>
</dbReference>
<dbReference type="PDB" id="4V6F">
    <property type="method" value="X-ray"/>
    <property type="resolution" value="3.10 A"/>
    <property type="chains" value="BT/CT=1-105"/>
</dbReference>
<dbReference type="PDB" id="4V6G">
    <property type="method" value="X-ray"/>
    <property type="resolution" value="3.50 A"/>
    <property type="chains" value="AT/CT=1-105"/>
</dbReference>
<dbReference type="PDB" id="4V7J">
    <property type="method" value="X-ray"/>
    <property type="resolution" value="3.30 A"/>
    <property type="chains" value="Aq/Bq=1-105"/>
</dbReference>
<dbReference type="PDB" id="4V7K">
    <property type="method" value="X-ray"/>
    <property type="resolution" value="3.60 A"/>
    <property type="chains" value="Aq/Bq=1-105"/>
</dbReference>
<dbReference type="PDB" id="4V7L">
    <property type="method" value="X-ray"/>
    <property type="resolution" value="3.00 A"/>
    <property type="chains" value="AQ/CQ=1-105"/>
</dbReference>
<dbReference type="PDB" id="4V7M">
    <property type="method" value="X-ray"/>
    <property type="resolution" value="3.45 A"/>
    <property type="chains" value="AQ/CQ=1-105"/>
</dbReference>
<dbReference type="PDB" id="4V7W">
    <property type="method" value="X-ray"/>
    <property type="resolution" value="3.00 A"/>
    <property type="chains" value="AQ/CQ=1-105"/>
</dbReference>
<dbReference type="PDB" id="4V7X">
    <property type="method" value="X-ray"/>
    <property type="resolution" value="3.00 A"/>
    <property type="chains" value="AQ/CQ=1-105"/>
</dbReference>
<dbReference type="PDB" id="4V7Y">
    <property type="method" value="X-ray"/>
    <property type="resolution" value="3.00 A"/>
    <property type="chains" value="AQ/CQ=1-105"/>
</dbReference>
<dbReference type="PDB" id="4V7Z">
    <property type="method" value="X-ray"/>
    <property type="resolution" value="3.10 A"/>
    <property type="chains" value="AQ/CQ=1-105"/>
</dbReference>
<dbReference type="PDB" id="4V87">
    <property type="method" value="X-ray"/>
    <property type="resolution" value="3.10 A"/>
    <property type="chains" value="BT/CT=1-105"/>
</dbReference>
<dbReference type="PDB" id="4V8A">
    <property type="method" value="X-ray"/>
    <property type="resolution" value="3.20 A"/>
    <property type="chains" value="CQ/DQ=1-105"/>
</dbReference>
<dbReference type="PDB" id="4V8B">
    <property type="method" value="X-ray"/>
    <property type="resolution" value="3.00 A"/>
    <property type="chains" value="AT/CT=1-105"/>
</dbReference>
<dbReference type="PDB" id="4V8C">
    <property type="method" value="X-ray"/>
    <property type="resolution" value="3.30 A"/>
    <property type="chains" value="CT/DT=1-105"/>
</dbReference>
<dbReference type="PDB" id="4V8D">
    <property type="method" value="X-ray"/>
    <property type="resolution" value="3.00 A"/>
    <property type="chains" value="AT/CT=1-105"/>
</dbReference>
<dbReference type="PDB" id="4V8E">
    <property type="method" value="X-ray"/>
    <property type="resolution" value="3.30 A"/>
    <property type="chains" value="BT/DT=1-105"/>
</dbReference>
<dbReference type="PDB" id="4V8F">
    <property type="method" value="X-ray"/>
    <property type="resolution" value="3.30 A"/>
    <property type="chains" value="BT/CT=1-105"/>
</dbReference>
<dbReference type="PDB" id="4V8G">
    <property type="method" value="X-ray"/>
    <property type="resolution" value="3.00 A"/>
    <property type="chains" value="AQ/CQ=1-105"/>
</dbReference>
<dbReference type="PDB" id="4V8H">
    <property type="method" value="X-ray"/>
    <property type="resolution" value="3.10 A"/>
    <property type="chains" value="AQ/CQ=1-105"/>
</dbReference>
<dbReference type="PDB" id="4V8I">
    <property type="method" value="X-ray"/>
    <property type="resolution" value="2.70 A"/>
    <property type="chains" value="AQ/CQ=1-105"/>
</dbReference>
<dbReference type="PDB" id="4V8J">
    <property type="method" value="X-ray"/>
    <property type="resolution" value="3.90 A"/>
    <property type="chains" value="AQ/CQ=1-105"/>
</dbReference>
<dbReference type="PDB" id="4V8N">
    <property type="method" value="X-ray"/>
    <property type="resolution" value="3.10 A"/>
    <property type="chains" value="AQ/CQ=1-105"/>
</dbReference>
<dbReference type="PDB" id="4V8O">
    <property type="method" value="X-ray"/>
    <property type="resolution" value="3.80 A"/>
    <property type="chains" value="AQ=1-105"/>
</dbReference>
<dbReference type="PDB" id="4V8Q">
    <property type="method" value="X-ray"/>
    <property type="resolution" value="3.10 A"/>
    <property type="chains" value="BQ=1-105"/>
</dbReference>
<dbReference type="PDB" id="4V8U">
    <property type="method" value="X-ray"/>
    <property type="resolution" value="3.70 A"/>
    <property type="chains" value="AQ/CQ=1-105"/>
</dbReference>
<dbReference type="PDB" id="4V8X">
    <property type="method" value="X-ray"/>
    <property type="resolution" value="3.35 A"/>
    <property type="chains" value="AQ/CQ=1-105"/>
</dbReference>
<dbReference type="PDB" id="4V90">
    <property type="method" value="X-ray"/>
    <property type="resolution" value="2.95 A"/>
    <property type="chains" value="AQ=1-105"/>
</dbReference>
<dbReference type="PDB" id="4V95">
    <property type="method" value="X-ray"/>
    <property type="resolution" value="3.20 A"/>
    <property type="chains" value="AQ/CQ=1-105"/>
</dbReference>
<dbReference type="PDB" id="4V97">
    <property type="method" value="X-ray"/>
    <property type="resolution" value="3.52 A"/>
    <property type="chains" value="AQ/CQ=1-105"/>
</dbReference>
<dbReference type="PDB" id="4V9A">
    <property type="method" value="X-ray"/>
    <property type="resolution" value="3.30 A"/>
    <property type="chains" value="AT/CT=1-105"/>
</dbReference>
<dbReference type="PDB" id="4V9B">
    <property type="method" value="X-ray"/>
    <property type="resolution" value="3.10 A"/>
    <property type="chains" value="AT/CT=1-105"/>
</dbReference>
<dbReference type="PDB" id="4V9H">
    <property type="method" value="X-ray"/>
    <property type="resolution" value="2.86 A"/>
    <property type="chains" value="AQ=2-100"/>
</dbReference>
<dbReference type="PDB" id="4V9I">
    <property type="method" value="X-ray"/>
    <property type="resolution" value="3.30 A"/>
    <property type="chains" value="AQ/CQ=2-100"/>
</dbReference>
<dbReference type="PDB" id="4V9R">
    <property type="method" value="X-ray"/>
    <property type="resolution" value="3.00 A"/>
    <property type="chains" value="AQ/CQ=1-105"/>
</dbReference>
<dbReference type="PDB" id="4V9S">
    <property type="method" value="X-ray"/>
    <property type="resolution" value="3.10 A"/>
    <property type="chains" value="AQ/CQ=1-105"/>
</dbReference>
<dbReference type="PDB" id="4W2E">
    <property type="method" value="X-ray"/>
    <property type="resolution" value="2.90 A"/>
    <property type="chains" value="q=1-105"/>
</dbReference>
<dbReference type="PDB" id="4W2F">
    <property type="method" value="X-ray"/>
    <property type="resolution" value="2.40 A"/>
    <property type="chains" value="AQ/CQ=1-105"/>
</dbReference>
<dbReference type="PDB" id="4W2G">
    <property type="method" value="X-ray"/>
    <property type="resolution" value="2.55 A"/>
    <property type="chains" value="AQ/CQ=1-105"/>
</dbReference>
<dbReference type="PDB" id="4W2H">
    <property type="method" value="X-ray"/>
    <property type="resolution" value="2.70 A"/>
    <property type="chains" value="AQ/CQ=1-105"/>
</dbReference>
<dbReference type="PDB" id="4W2I">
    <property type="method" value="X-ray"/>
    <property type="resolution" value="2.70 A"/>
    <property type="chains" value="AQ/CQ=1-105"/>
</dbReference>
<dbReference type="PDB" id="4W4G">
    <property type="method" value="X-ray"/>
    <property type="resolution" value="3.30 A"/>
    <property type="chains" value="QQ/XQ=1-105"/>
</dbReference>
<dbReference type="PDB" id="4WPO">
    <property type="method" value="X-ray"/>
    <property type="resolution" value="2.80 A"/>
    <property type="chains" value="BQ/DQ=1-105"/>
</dbReference>
<dbReference type="PDB" id="4WQ1">
    <property type="method" value="X-ray"/>
    <property type="resolution" value="3.10 A"/>
    <property type="chains" value="8A/8I=1-105"/>
</dbReference>
<dbReference type="PDB" id="4WQF">
    <property type="method" value="X-ray"/>
    <property type="resolution" value="2.80 A"/>
    <property type="chains" value="BQ/DQ=1-105"/>
</dbReference>
<dbReference type="PDB" id="4WQR">
    <property type="method" value="X-ray"/>
    <property type="resolution" value="3.15 A"/>
    <property type="chains" value="8A/8I=1-105"/>
</dbReference>
<dbReference type="PDB" id="4WQU">
    <property type="method" value="X-ray"/>
    <property type="resolution" value="2.80 A"/>
    <property type="chains" value="BQ/DQ=1-105"/>
</dbReference>
<dbReference type="PDB" id="4WQY">
    <property type="method" value="X-ray"/>
    <property type="resolution" value="2.80 A"/>
    <property type="chains" value="BQ/DQ=1-105"/>
</dbReference>
<dbReference type="PDB" id="4WR6">
    <property type="method" value="X-ray"/>
    <property type="resolution" value="3.05 A"/>
    <property type="chains" value="8A/8I=1-105"/>
</dbReference>
<dbReference type="PDB" id="4WRA">
    <property type="method" value="X-ray"/>
    <property type="resolution" value="3.05 A"/>
    <property type="chains" value="8A/8I=1-105"/>
</dbReference>
<dbReference type="PDB" id="4WRO">
    <property type="method" value="X-ray"/>
    <property type="resolution" value="3.05 A"/>
    <property type="chains" value="8I=1-105"/>
</dbReference>
<dbReference type="PDB" id="4WSD">
    <property type="method" value="X-ray"/>
    <property type="resolution" value="2.95 A"/>
    <property type="chains" value="8A/8I=1-105"/>
</dbReference>
<dbReference type="PDB" id="4WSM">
    <property type="method" value="X-ray"/>
    <property type="resolution" value="3.30 A"/>
    <property type="chains" value="8A/8I=1-105"/>
</dbReference>
<dbReference type="PDB" id="4WT1">
    <property type="method" value="X-ray"/>
    <property type="resolution" value="3.05 A"/>
    <property type="chains" value="8A/8I=1-105"/>
</dbReference>
<dbReference type="PDB" id="4WT8">
    <property type="method" value="X-ray"/>
    <property type="resolution" value="3.40 A"/>
    <property type="chains" value="AR/BR=2-100"/>
</dbReference>
<dbReference type="PDB" id="4WU1">
    <property type="method" value="X-ray"/>
    <property type="resolution" value="3.20 A"/>
    <property type="chains" value="8A/8I=1-105"/>
</dbReference>
<dbReference type="PDB" id="4WZD">
    <property type="method" value="X-ray"/>
    <property type="resolution" value="3.10 A"/>
    <property type="chains" value="8A/8I=1-105"/>
</dbReference>
<dbReference type="PDB" id="4WZO">
    <property type="method" value="X-ray"/>
    <property type="resolution" value="3.30 A"/>
    <property type="chains" value="8A/8I=1-105"/>
</dbReference>
<dbReference type="PDB" id="4X62">
    <property type="method" value="X-ray"/>
    <property type="resolution" value="3.45 A"/>
    <property type="chains" value="Q=2-100"/>
</dbReference>
<dbReference type="PDB" id="4X64">
    <property type="method" value="X-ray"/>
    <property type="resolution" value="3.35 A"/>
    <property type="chains" value="Q=2-100"/>
</dbReference>
<dbReference type="PDB" id="4X65">
    <property type="method" value="X-ray"/>
    <property type="resolution" value="3.35 A"/>
    <property type="chains" value="Q=2-100"/>
</dbReference>
<dbReference type="PDB" id="4X66">
    <property type="method" value="X-ray"/>
    <property type="resolution" value="3.45 A"/>
    <property type="chains" value="Q=2-100"/>
</dbReference>
<dbReference type="PDB" id="4Y4O">
    <property type="method" value="X-ray"/>
    <property type="resolution" value="2.30 A"/>
    <property type="chains" value="1q/2q=1-105"/>
</dbReference>
<dbReference type="PDB" id="4Y4P">
    <property type="method" value="X-ray"/>
    <property type="resolution" value="2.50 A"/>
    <property type="chains" value="1q/2q=1-105"/>
</dbReference>
<dbReference type="PDB" id="4YHH">
    <property type="method" value="X-ray"/>
    <property type="resolution" value="3.42 A"/>
    <property type="chains" value="Q=2-105"/>
</dbReference>
<dbReference type="PDB" id="4YPB">
    <property type="method" value="X-ray"/>
    <property type="resolution" value="3.40 A"/>
    <property type="chains" value="QQ/XQ=1-105"/>
</dbReference>
<dbReference type="PDB" id="4YY3">
    <property type="method" value="X-ray"/>
    <property type="resolution" value="3.60 A"/>
    <property type="chains" value="Q=1-105"/>
</dbReference>
<dbReference type="PDB" id="4YZV">
    <property type="method" value="X-ray"/>
    <property type="resolution" value="3.10 A"/>
    <property type="chains" value="QQ/XQ=1-105"/>
</dbReference>
<dbReference type="PDB" id="4Z3S">
    <property type="method" value="X-ray"/>
    <property type="resolution" value="2.65 A"/>
    <property type="chains" value="1q/2q=1-105"/>
</dbReference>
<dbReference type="PDB" id="4Z8C">
    <property type="method" value="X-ray"/>
    <property type="resolution" value="2.90 A"/>
    <property type="chains" value="1q/2q=1-105"/>
</dbReference>
<dbReference type="PDB" id="4ZER">
    <property type="method" value="X-ray"/>
    <property type="resolution" value="3.10 A"/>
    <property type="chains" value="1q/2q=2-100"/>
</dbReference>
<dbReference type="PDB" id="4ZSN">
    <property type="method" value="X-ray"/>
    <property type="resolution" value="3.60 A"/>
    <property type="chains" value="QQ/XQ=1-105"/>
</dbReference>
<dbReference type="PDB" id="5A9Z">
    <property type="method" value="EM"/>
    <property type="resolution" value="4.70 A"/>
    <property type="chains" value="BU=2-105"/>
</dbReference>
<dbReference type="PDB" id="5AA0">
    <property type="method" value="EM"/>
    <property type="resolution" value="5.00 A"/>
    <property type="chains" value="BU=2-105"/>
</dbReference>
<dbReference type="PDB" id="5BR8">
    <property type="method" value="X-ray"/>
    <property type="resolution" value="3.40 A"/>
    <property type="chains" value="Q=1-105"/>
</dbReference>
<dbReference type="PDB" id="5CZP">
    <property type="method" value="X-ray"/>
    <property type="resolution" value="3.30 A"/>
    <property type="chains" value="QQ/XQ=1-105"/>
</dbReference>
<dbReference type="PDB" id="5D8B">
    <property type="method" value="X-ray"/>
    <property type="resolution" value="3.63 A"/>
    <property type="chains" value="NC/RA=1-105"/>
</dbReference>
<dbReference type="PDB" id="5DFE">
    <property type="method" value="X-ray"/>
    <property type="resolution" value="3.10 A"/>
    <property type="chains" value="QQ/XQ=1-105"/>
</dbReference>
<dbReference type="PDB" id="5DOX">
    <property type="method" value="X-ray"/>
    <property type="resolution" value="3.10 A"/>
    <property type="chains" value="1q/2q=1-105"/>
</dbReference>
<dbReference type="PDB" id="5DOY">
    <property type="method" value="X-ray"/>
    <property type="resolution" value="2.60 A"/>
    <property type="chains" value="1q/2q=1-105"/>
</dbReference>
<dbReference type="PDB" id="5E7K">
    <property type="method" value="X-ray"/>
    <property type="resolution" value="3.20 A"/>
    <property type="chains" value="8A/8I=1-105"/>
</dbReference>
<dbReference type="PDB" id="5E81">
    <property type="method" value="X-ray"/>
    <property type="resolution" value="2.95 A"/>
    <property type="chains" value="8A/8I=1-105"/>
</dbReference>
<dbReference type="PDB" id="5EL4">
    <property type="method" value="X-ray"/>
    <property type="resolution" value="3.15 A"/>
    <property type="chains" value="8A/8I=1-105"/>
</dbReference>
<dbReference type="PDB" id="5EL5">
    <property type="method" value="X-ray"/>
    <property type="resolution" value="3.15 A"/>
    <property type="chains" value="8A/8I=1-105"/>
</dbReference>
<dbReference type="PDB" id="5EL6">
    <property type="method" value="X-ray"/>
    <property type="resolution" value="3.10 A"/>
    <property type="chains" value="8A/8I=1-105"/>
</dbReference>
<dbReference type="PDB" id="5EL7">
    <property type="method" value="X-ray"/>
    <property type="resolution" value="3.15 A"/>
    <property type="chains" value="8A/8I=1-105"/>
</dbReference>
<dbReference type="PDB" id="5F8K">
    <property type="method" value="X-ray"/>
    <property type="resolution" value="2.80 A"/>
    <property type="chains" value="1q/2q=2-100"/>
</dbReference>
<dbReference type="PDB" id="5FDU">
    <property type="method" value="X-ray"/>
    <property type="resolution" value="2.90 A"/>
    <property type="chains" value="1q/2q=2-100"/>
</dbReference>
<dbReference type="PDB" id="5FDV">
    <property type="method" value="X-ray"/>
    <property type="resolution" value="2.80 A"/>
    <property type="chains" value="1q/2q=2-100"/>
</dbReference>
<dbReference type="PDB" id="5HAU">
    <property type="method" value="X-ray"/>
    <property type="resolution" value="3.00 A"/>
    <property type="chains" value="1q/2q=1-105"/>
</dbReference>
<dbReference type="PDB" id="5HCP">
    <property type="method" value="X-ray"/>
    <property type="resolution" value="2.89 A"/>
    <property type="chains" value="1q/2q=1-105"/>
</dbReference>
<dbReference type="PDB" id="5HCQ">
    <property type="method" value="X-ray"/>
    <property type="resolution" value="2.80 A"/>
    <property type="chains" value="1q/2q=1-105"/>
</dbReference>
<dbReference type="PDB" id="5HCR">
    <property type="method" value="X-ray"/>
    <property type="resolution" value="2.80 A"/>
    <property type="chains" value="1q/2q=1-105"/>
</dbReference>
<dbReference type="PDB" id="5HD1">
    <property type="method" value="X-ray"/>
    <property type="resolution" value="2.70 A"/>
    <property type="chains" value="1q/2q=1-105"/>
</dbReference>
<dbReference type="PDB" id="5IB7">
    <property type="method" value="X-ray"/>
    <property type="resolution" value="2.99 A"/>
    <property type="chains" value="8A/8I=1-105"/>
</dbReference>
<dbReference type="PDB" id="5IB8">
    <property type="method" value="X-ray"/>
    <property type="resolution" value="3.13 A"/>
    <property type="chains" value="8A/8I=1-105"/>
</dbReference>
<dbReference type="PDB" id="5IBB">
    <property type="method" value="X-ray"/>
    <property type="resolution" value="2.96 A"/>
    <property type="chains" value="8A/8I=1-105"/>
</dbReference>
<dbReference type="PDB" id="5IWA">
    <property type="method" value="X-ray"/>
    <property type="resolution" value="3.50 A"/>
    <property type="chains" value="Q=2-105"/>
</dbReference>
<dbReference type="PDB" id="5J30">
    <property type="method" value="X-ray"/>
    <property type="resolution" value="3.20 A"/>
    <property type="chains" value="QQ/XQ=1-105"/>
</dbReference>
<dbReference type="PDB" id="5J3C">
    <property type="method" value="X-ray"/>
    <property type="resolution" value="3.04 A"/>
    <property type="chains" value="QQ/XQ=1-105"/>
</dbReference>
<dbReference type="PDB" id="5J4B">
    <property type="method" value="X-ray"/>
    <property type="resolution" value="2.60 A"/>
    <property type="chains" value="1q/2q=1-105"/>
</dbReference>
<dbReference type="PDB" id="5J4C">
    <property type="method" value="X-ray"/>
    <property type="resolution" value="2.80 A"/>
    <property type="chains" value="1q/2q=1-105"/>
</dbReference>
<dbReference type="PDB" id="5J8B">
    <property type="method" value="X-ray"/>
    <property type="resolution" value="2.60 A"/>
    <property type="chains" value="q=1-105"/>
</dbReference>
<dbReference type="PDB" id="5LMN">
    <property type="method" value="EM"/>
    <property type="resolution" value="3.55 A"/>
    <property type="chains" value="Q=1-105"/>
</dbReference>
<dbReference type="PDB" id="5LMO">
    <property type="method" value="EM"/>
    <property type="resolution" value="4.30 A"/>
    <property type="chains" value="Q=1-105"/>
</dbReference>
<dbReference type="PDB" id="5LMP">
    <property type="method" value="EM"/>
    <property type="resolution" value="5.35 A"/>
    <property type="chains" value="Q=1-105"/>
</dbReference>
<dbReference type="PDB" id="5LMQ">
    <property type="method" value="EM"/>
    <property type="resolution" value="4.20 A"/>
    <property type="chains" value="Q=1-105"/>
</dbReference>
<dbReference type="PDB" id="5LMR">
    <property type="method" value="EM"/>
    <property type="resolution" value="4.45 A"/>
    <property type="chains" value="Q=1-105"/>
</dbReference>
<dbReference type="PDB" id="5LMS">
    <property type="method" value="EM"/>
    <property type="resolution" value="5.10 A"/>
    <property type="chains" value="Q=1-105"/>
</dbReference>
<dbReference type="PDB" id="5LMT">
    <property type="method" value="EM"/>
    <property type="resolution" value="4.15 A"/>
    <property type="chains" value="Q=1-105"/>
</dbReference>
<dbReference type="PDB" id="5LMU">
    <property type="method" value="EM"/>
    <property type="resolution" value="4.00 A"/>
    <property type="chains" value="Q=1-105"/>
</dbReference>
<dbReference type="PDB" id="5LMV">
    <property type="method" value="EM"/>
    <property type="resolution" value="4.90 A"/>
    <property type="chains" value="Q=1-105"/>
</dbReference>
<dbReference type="PDB" id="5NDJ">
    <property type="method" value="X-ray"/>
    <property type="resolution" value="3.15 A"/>
    <property type="chains" value="8A/8I=1-105"/>
</dbReference>
<dbReference type="PDB" id="5NDK">
    <property type="method" value="X-ray"/>
    <property type="resolution" value="2.95 A"/>
    <property type="chains" value="8A/8I=1-105"/>
</dbReference>
<dbReference type="PDB" id="5OT7">
    <property type="method" value="EM"/>
    <property type="resolution" value="3.80 A"/>
    <property type="chains" value="P=2-101"/>
</dbReference>
<dbReference type="PDB" id="5UQ7">
    <property type="method" value="EM"/>
    <property type="resolution" value="3.50 A"/>
    <property type="chains" value="q=2-100"/>
</dbReference>
<dbReference type="PDB" id="5UQ8">
    <property type="method" value="EM"/>
    <property type="resolution" value="3.20 A"/>
    <property type="chains" value="q=2-100"/>
</dbReference>
<dbReference type="PDB" id="5VP2">
    <property type="method" value="X-ray"/>
    <property type="resolution" value="2.80 A"/>
    <property type="chains" value="1q/2q=1-105"/>
</dbReference>
<dbReference type="PDB" id="5VPO">
    <property type="method" value="X-ray"/>
    <property type="resolution" value="3.34 A"/>
    <property type="chains" value="QQ/XQ=1-105"/>
</dbReference>
<dbReference type="PDB" id="5VPP">
    <property type="method" value="X-ray"/>
    <property type="resolution" value="3.90 A"/>
    <property type="chains" value="QQ/XQ=1-105"/>
</dbReference>
<dbReference type="PDB" id="5W4K">
    <property type="method" value="X-ray"/>
    <property type="resolution" value="2.70 A"/>
    <property type="chains" value="1q/2q=1-105"/>
</dbReference>
<dbReference type="PDB" id="5WIS">
    <property type="method" value="X-ray"/>
    <property type="resolution" value="2.70 A"/>
    <property type="chains" value="1q/2q=1-105"/>
</dbReference>
<dbReference type="PDB" id="5WIT">
    <property type="method" value="X-ray"/>
    <property type="resolution" value="2.60 A"/>
    <property type="chains" value="1q/2q=1-105"/>
</dbReference>
<dbReference type="PDB" id="5WNP">
    <property type="method" value="X-ray"/>
    <property type="resolution" value="3.30 A"/>
    <property type="chains" value="Q=2-100"/>
</dbReference>
<dbReference type="PDB" id="5WNQ">
    <property type="method" value="X-ray"/>
    <property type="resolution" value="3.50 A"/>
    <property type="chains" value="Q=2-100"/>
</dbReference>
<dbReference type="PDB" id="5WNR">
    <property type="method" value="X-ray"/>
    <property type="resolution" value="3.50 A"/>
    <property type="chains" value="Q=2-100"/>
</dbReference>
<dbReference type="PDB" id="5WNS">
    <property type="method" value="X-ray"/>
    <property type="resolution" value="3.50 A"/>
    <property type="chains" value="Q=2-100"/>
</dbReference>
<dbReference type="PDB" id="5WNT">
    <property type="method" value="X-ray"/>
    <property type="resolution" value="3.30 A"/>
    <property type="chains" value="Q=2-100"/>
</dbReference>
<dbReference type="PDB" id="5WNU">
    <property type="method" value="X-ray"/>
    <property type="resolution" value="3.40 A"/>
    <property type="chains" value="Q=2-100"/>
</dbReference>
<dbReference type="PDB" id="5WNV">
    <property type="method" value="X-ray"/>
    <property type="resolution" value="3.30 A"/>
    <property type="chains" value="Q=2-100"/>
</dbReference>
<dbReference type="PDB" id="5ZLU">
    <property type="method" value="EM"/>
    <property type="resolution" value="3.60 A"/>
    <property type="chains" value="A=2-105"/>
</dbReference>
<dbReference type="PDB" id="6BUW">
    <property type="method" value="X-ray"/>
    <property type="resolution" value="3.50 A"/>
    <property type="chains" value="QQ/XQ=1-105"/>
</dbReference>
<dbReference type="PDB" id="6BZ6">
    <property type="method" value="X-ray"/>
    <property type="resolution" value="3.18 A"/>
    <property type="chains" value="QQ/XQ=1-105"/>
</dbReference>
<dbReference type="PDB" id="6BZ7">
    <property type="method" value="X-ray"/>
    <property type="resolution" value="3.68 A"/>
    <property type="chains" value="QQ/XQ=1-105"/>
</dbReference>
<dbReference type="PDB" id="6BZ8">
    <property type="method" value="X-ray"/>
    <property type="resolution" value="3.74 A"/>
    <property type="chains" value="QQ/XQ=1-105"/>
</dbReference>
<dbReference type="PDB" id="6C5L">
    <property type="method" value="X-ray"/>
    <property type="resolution" value="3.20 A"/>
    <property type="chains" value="AQ/CQ=1-105"/>
</dbReference>
<dbReference type="PDB" id="6CAE">
    <property type="method" value="X-ray"/>
    <property type="resolution" value="2.60 A"/>
    <property type="chains" value="1q/2q=1-105"/>
</dbReference>
<dbReference type="PDB" id="6CAO">
    <property type="method" value="X-ray"/>
    <property type="resolution" value="3.45 A"/>
    <property type="chains" value="Q=2-100"/>
</dbReference>
<dbReference type="PDB" id="6CAP">
    <property type="method" value="X-ray"/>
    <property type="resolution" value="3.40 A"/>
    <property type="chains" value="Q=2-100"/>
</dbReference>
<dbReference type="PDB" id="6CAQ">
    <property type="method" value="X-ray"/>
    <property type="resolution" value="3.40 A"/>
    <property type="chains" value="Q=2-100"/>
</dbReference>
<dbReference type="PDB" id="6CAR">
    <property type="method" value="X-ray"/>
    <property type="resolution" value="3.40 A"/>
    <property type="chains" value="Q=2-105"/>
</dbReference>
<dbReference type="PDB" id="6CAS">
    <property type="method" value="X-ray"/>
    <property type="resolution" value="3.50 A"/>
    <property type="chains" value="Q=2-105"/>
</dbReference>
<dbReference type="PDB" id="6CFJ">
    <property type="method" value="X-ray"/>
    <property type="resolution" value="2.80 A"/>
    <property type="chains" value="1q/2q=1-105"/>
</dbReference>
<dbReference type="PDB" id="6CFK">
    <property type="method" value="X-ray"/>
    <property type="resolution" value="2.70 A"/>
    <property type="chains" value="1q/2q=1-105"/>
</dbReference>
<dbReference type="PDB" id="6CFL">
    <property type="method" value="X-ray"/>
    <property type="resolution" value="2.60 A"/>
    <property type="chains" value="1q/2q=1-105"/>
</dbReference>
<dbReference type="PDB" id="6CZR">
    <property type="method" value="X-ray"/>
    <property type="resolution" value="3.14 A"/>
    <property type="chains" value="1q/2q=2-100"/>
</dbReference>
<dbReference type="PDB" id="6DTI">
    <property type="method" value="X-ray"/>
    <property type="resolution" value="3.54 A"/>
    <property type="chains" value="Q=1-105"/>
</dbReference>
<dbReference type="PDB" id="6FKR">
    <property type="method" value="X-ray"/>
    <property type="resolution" value="3.20 A"/>
    <property type="chains" value="1q/2q=2-100"/>
</dbReference>
<dbReference type="PDB" id="6GSJ">
    <property type="method" value="X-ray"/>
    <property type="resolution" value="2.96 A"/>
    <property type="chains" value="8A/8I=1-105"/>
</dbReference>
<dbReference type="PDB" id="6GSK">
    <property type="method" value="X-ray"/>
    <property type="resolution" value="3.36 A"/>
    <property type="chains" value="8A/8I=1-105"/>
</dbReference>
<dbReference type="PDB" id="6GSL">
    <property type="method" value="X-ray"/>
    <property type="resolution" value="3.16 A"/>
    <property type="chains" value="8A/8I=1-105"/>
</dbReference>
<dbReference type="PDB" id="6GZQ">
    <property type="method" value="EM"/>
    <property type="resolution" value="3.28 A"/>
    <property type="chains" value="Q2=2-101"/>
</dbReference>
<dbReference type="PDB" id="6GZX">
    <property type="method" value="EM"/>
    <property type="resolution" value="4.57 A"/>
    <property type="chains" value="Q3/Q4=2-101"/>
</dbReference>
<dbReference type="PDB" id="6GZZ">
    <property type="method" value="EM"/>
    <property type="resolution" value="4.13 A"/>
    <property type="chains" value="Q3/Q4=2-101"/>
</dbReference>
<dbReference type="PDB" id="6MKN">
    <property type="method" value="X-ray"/>
    <property type="resolution" value="3.46 A"/>
    <property type="chains" value="Q=1-105"/>
</dbReference>
<dbReference type="PDB" id="6MPF">
    <property type="method" value="X-ray"/>
    <property type="resolution" value="3.33 A"/>
    <property type="chains" value="Q=2-105"/>
</dbReference>
<dbReference type="PDB" id="6MPI">
    <property type="method" value="X-ray"/>
    <property type="resolution" value="3.33 A"/>
    <property type="chains" value="Q=1-105"/>
</dbReference>
<dbReference type="PDB" id="6N9E">
    <property type="method" value="X-ray"/>
    <property type="resolution" value="3.70 A"/>
    <property type="chains" value="1q/2q=1-105"/>
</dbReference>
<dbReference type="PDB" id="6N9F">
    <property type="method" value="X-ray"/>
    <property type="resolution" value="3.70 A"/>
    <property type="chains" value="1q/2q=1-105"/>
</dbReference>
<dbReference type="PDB" id="6ND5">
    <property type="method" value="X-ray"/>
    <property type="resolution" value="2.60 A"/>
    <property type="chains" value="1q/2q=1-105"/>
</dbReference>
<dbReference type="PDB" id="6ND6">
    <property type="method" value="X-ray"/>
    <property type="resolution" value="2.85 A"/>
    <property type="chains" value="1q/2q=1-105"/>
</dbReference>
<dbReference type="PDB" id="6NDK">
    <property type="method" value="X-ray"/>
    <property type="resolution" value="3.64 A"/>
    <property type="chains" value="QQ/XQ=1-105"/>
</dbReference>
<dbReference type="PDB" id="6NSH">
    <property type="method" value="X-ray"/>
    <property type="resolution" value="3.40 A"/>
    <property type="chains" value="QQ/XQ=1-105"/>
</dbReference>
<dbReference type="PDB" id="6NTA">
    <property type="method" value="X-ray"/>
    <property type="resolution" value="3.10 A"/>
    <property type="chains" value="QQ/XQ=1-105"/>
</dbReference>
<dbReference type="PDB" id="6NUO">
    <property type="method" value="X-ray"/>
    <property type="resolution" value="3.20 A"/>
    <property type="chains" value="QQ/XQ=1-105"/>
</dbReference>
<dbReference type="PDB" id="6NWY">
    <property type="method" value="X-ray"/>
    <property type="resolution" value="3.50 A"/>
    <property type="chains" value="QQ/XQ=1-105"/>
</dbReference>
<dbReference type="PDB" id="6NY6">
    <property type="method" value="X-ray"/>
    <property type="resolution" value="3.74 A"/>
    <property type="chains" value="Q=1-105"/>
</dbReference>
<dbReference type="PDB" id="6O3M">
    <property type="method" value="X-ray"/>
    <property type="resolution" value="3.97 A"/>
    <property type="chains" value="QQ/XQ=1-105"/>
</dbReference>
<dbReference type="PDB" id="6O97">
    <property type="method" value="X-ray"/>
    <property type="resolution" value="2.75 A"/>
    <property type="chains" value="1q/2q=1-105"/>
</dbReference>
<dbReference type="PDB" id="6OF1">
    <property type="method" value="X-ray"/>
    <property type="resolution" value="2.80 A"/>
    <property type="chains" value="1q/2q=1-105"/>
</dbReference>
<dbReference type="PDB" id="6OF6">
    <property type="method" value="X-ray"/>
    <property type="resolution" value="3.20 A"/>
    <property type="chains" value="QQ/XQ=1-105"/>
</dbReference>
<dbReference type="PDB" id="6OJ2">
    <property type="method" value="X-ray"/>
    <property type="resolution" value="3.20 A"/>
    <property type="chains" value="QQ/XQ=1-105"/>
</dbReference>
<dbReference type="PDB" id="6OPE">
    <property type="method" value="X-ray"/>
    <property type="resolution" value="3.10 A"/>
    <property type="chains" value="QQ/XQ=1-105"/>
</dbReference>
<dbReference type="PDB" id="6ORD">
    <property type="method" value="X-ray"/>
    <property type="resolution" value="3.10 A"/>
    <property type="chains" value="QQ/XQ=1-105"/>
</dbReference>
<dbReference type="PDB" id="6OSI">
    <property type="method" value="X-ray"/>
    <property type="resolution" value="4.14 A"/>
    <property type="chains" value="QQ/XQ=1-105"/>
</dbReference>
<dbReference type="PDB" id="6OTR">
    <property type="method" value="X-ray"/>
    <property type="resolution" value="3.12 A"/>
    <property type="chains" value="QQ/XQ=1-105"/>
</dbReference>
<dbReference type="PDB" id="6OXA">
    <property type="method" value="X-ray"/>
    <property type="resolution" value="3.25 A"/>
    <property type="chains" value="QQ/XQ=1-105"/>
</dbReference>
<dbReference type="PDB" id="6OXI">
    <property type="method" value="X-ray"/>
    <property type="resolution" value="3.50 A"/>
    <property type="chains" value="QQ/XQ=1-105"/>
</dbReference>
<dbReference type="PDB" id="6Q95">
    <property type="method" value="EM"/>
    <property type="resolution" value="3.70 A"/>
    <property type="chains" value="v=2-101"/>
</dbReference>
<dbReference type="PDB" id="6QNQ">
    <property type="method" value="X-ray"/>
    <property type="resolution" value="3.50 A"/>
    <property type="chains" value="8A/8I=1-105"/>
</dbReference>
<dbReference type="PDB" id="6QNR">
    <property type="method" value="X-ray"/>
    <property type="resolution" value="3.10 A"/>
    <property type="chains" value="8A/8I=1-105"/>
</dbReference>
<dbReference type="PDB" id="6UCQ">
    <property type="method" value="X-ray"/>
    <property type="resolution" value="3.50 A"/>
    <property type="chains" value="1q/2q=1-105"/>
</dbReference>
<dbReference type="PDB" id="6UO1">
    <property type="method" value="X-ray"/>
    <property type="resolution" value="2.95 A"/>
    <property type="chains" value="1q/2q=1-105"/>
</dbReference>
<dbReference type="PDB" id="6XHV">
    <property type="method" value="X-ray"/>
    <property type="resolution" value="2.40 A"/>
    <property type="chains" value="1q/2q=1-105"/>
</dbReference>
<dbReference type="PDB" id="6XHW">
    <property type="method" value="X-ray"/>
    <property type="resolution" value="2.50 A"/>
    <property type="chains" value="1q/2q=1-105"/>
</dbReference>
<dbReference type="PDB" id="6XHX">
    <property type="method" value="X-ray"/>
    <property type="resolution" value="2.55 A"/>
    <property type="chains" value="1q/2q=1-105"/>
</dbReference>
<dbReference type="PDB" id="6XHY">
    <property type="method" value="X-ray"/>
    <property type="resolution" value="2.60 A"/>
    <property type="chains" value="1q/2q=1-105"/>
</dbReference>
<dbReference type="PDB" id="6XQD">
    <property type="method" value="X-ray"/>
    <property type="resolution" value="2.80 A"/>
    <property type="chains" value="1q/2q=1-105"/>
</dbReference>
<dbReference type="PDB" id="6XQE">
    <property type="method" value="X-ray"/>
    <property type="resolution" value="3.00 A"/>
    <property type="chains" value="1q/2q=1-105"/>
</dbReference>
<dbReference type="PDB" id="7AZO">
    <property type="method" value="X-ray"/>
    <property type="resolution" value="3.30 A"/>
    <property type="chains" value="S17A/S17B=1-105"/>
</dbReference>
<dbReference type="PDB" id="7AZS">
    <property type="method" value="X-ray"/>
    <property type="resolution" value="3.10 A"/>
    <property type="chains" value="S17A/S17B=1-105"/>
</dbReference>
<dbReference type="PDB" id="7DUG">
    <property type="method" value="X-ray"/>
    <property type="resolution" value="3.75 A"/>
    <property type="chains" value="Q=1-105"/>
</dbReference>
<dbReference type="PDB" id="7DUH">
    <property type="method" value="X-ray"/>
    <property type="resolution" value="3.75 A"/>
    <property type="chains" value="Q=1-105"/>
</dbReference>
<dbReference type="PDB" id="7DUI">
    <property type="method" value="X-ray"/>
    <property type="resolution" value="3.62 A"/>
    <property type="chains" value="Q=1-105"/>
</dbReference>
<dbReference type="PDB" id="7DUJ">
    <property type="method" value="X-ray"/>
    <property type="resolution" value="3.75 A"/>
    <property type="chains" value="Q=1-105"/>
</dbReference>
<dbReference type="PDB" id="7DUK">
    <property type="method" value="X-ray"/>
    <property type="resolution" value="3.60 A"/>
    <property type="chains" value="Q=1-105"/>
</dbReference>
<dbReference type="PDB" id="7DUL">
    <property type="method" value="X-ray"/>
    <property type="resolution" value="3.62 A"/>
    <property type="chains" value="Q=1-105"/>
</dbReference>
<dbReference type="PDB" id="7JQL">
    <property type="method" value="X-ray"/>
    <property type="resolution" value="3.00 A"/>
    <property type="chains" value="1q/2q=1-105"/>
</dbReference>
<dbReference type="PDB" id="7JQM">
    <property type="method" value="X-ray"/>
    <property type="resolution" value="3.05 A"/>
    <property type="chains" value="1q/2q=1-105"/>
</dbReference>
<dbReference type="PDB" id="7LH5">
    <property type="method" value="X-ray"/>
    <property type="resolution" value="3.27 A"/>
    <property type="chains" value="AQ/CQ=1-105"/>
</dbReference>
<dbReference type="PDB" id="7MD7">
    <property type="method" value="X-ray"/>
    <property type="resolution" value="2.80 A"/>
    <property type="chains" value="1q/2q=1-105"/>
</dbReference>
<dbReference type="PDB" id="7RQ8">
    <property type="method" value="X-ray"/>
    <property type="resolution" value="2.50 A"/>
    <property type="chains" value="1q/2q=1-105"/>
</dbReference>
<dbReference type="PDB" id="7RQ9">
    <property type="method" value="X-ray"/>
    <property type="resolution" value="2.60 A"/>
    <property type="chains" value="1q/2q=1-105"/>
</dbReference>
<dbReference type="PDB" id="7RQA">
    <property type="method" value="X-ray"/>
    <property type="resolution" value="2.40 A"/>
    <property type="chains" value="1q/2q=1-105"/>
</dbReference>
<dbReference type="PDB" id="7RQB">
    <property type="method" value="X-ray"/>
    <property type="resolution" value="2.45 A"/>
    <property type="chains" value="1q/2q=1-105"/>
</dbReference>
<dbReference type="PDB" id="7RQC">
    <property type="method" value="X-ray"/>
    <property type="resolution" value="2.50 A"/>
    <property type="chains" value="1q/2q=1-105"/>
</dbReference>
<dbReference type="PDB" id="7RQD">
    <property type="method" value="X-ray"/>
    <property type="resolution" value="2.50 A"/>
    <property type="chains" value="1q/2q=1-105"/>
</dbReference>
<dbReference type="PDB" id="7RQE">
    <property type="method" value="X-ray"/>
    <property type="resolution" value="2.40 A"/>
    <property type="chains" value="1q/2q=1-105"/>
</dbReference>
<dbReference type="PDB" id="7U2H">
    <property type="method" value="X-ray"/>
    <property type="resolution" value="2.55 A"/>
    <property type="chains" value="1q/2q=1-105"/>
</dbReference>
<dbReference type="PDB" id="7U2I">
    <property type="method" value="X-ray"/>
    <property type="resolution" value="2.55 A"/>
    <property type="chains" value="1q/2q=1-105"/>
</dbReference>
<dbReference type="PDB" id="7U2J">
    <property type="method" value="X-ray"/>
    <property type="resolution" value="2.55 A"/>
    <property type="chains" value="1q/2q=1-105"/>
</dbReference>
<dbReference type="PDB" id="7V2L">
    <property type="method" value="EM"/>
    <property type="resolution" value="3.30 A"/>
    <property type="chains" value="Q=1-105"/>
</dbReference>
<dbReference type="PDB" id="7V2M">
    <property type="method" value="EM"/>
    <property type="resolution" value="3.40 A"/>
    <property type="chains" value="Q=1-105"/>
</dbReference>
<dbReference type="PDB" id="7V2N">
    <property type="method" value="EM"/>
    <property type="resolution" value="3.60 A"/>
    <property type="chains" value="Q=1-105"/>
</dbReference>
<dbReference type="PDB" id="7V2O">
    <property type="method" value="EM"/>
    <property type="resolution" value="3.50 A"/>
    <property type="chains" value="Q=1-105"/>
</dbReference>
<dbReference type="PDB" id="7V2P">
    <property type="method" value="EM"/>
    <property type="resolution" value="3.30 A"/>
    <property type="chains" value="Q=1-105"/>
</dbReference>
<dbReference type="PDB" id="7V2Q">
    <property type="method" value="EM"/>
    <property type="resolution" value="3.24 A"/>
    <property type="chains" value="Q=1-105"/>
</dbReference>
<dbReference type="PDB" id="8CVJ">
    <property type="method" value="X-ray"/>
    <property type="resolution" value="2.40 A"/>
    <property type="chains" value="1q/2q=1-105"/>
</dbReference>
<dbReference type="PDB" id="8CVK">
    <property type="method" value="X-ray"/>
    <property type="resolution" value="2.50 A"/>
    <property type="chains" value="1q/2q=1-105"/>
</dbReference>
<dbReference type="PDB" id="8CVL">
    <property type="method" value="X-ray"/>
    <property type="resolution" value="2.30 A"/>
    <property type="chains" value="1q/2q=1-105"/>
</dbReference>
<dbReference type="PDB" id="8EKB">
    <property type="method" value="X-ray"/>
    <property type="resolution" value="2.70 A"/>
    <property type="chains" value="1q/2q=1-105"/>
</dbReference>
<dbReference type="PDB" id="8EV6">
    <property type="method" value="X-ray"/>
    <property type="resolution" value="2.95 A"/>
    <property type="chains" value="1q/2q=1-105"/>
</dbReference>
<dbReference type="PDB" id="8EV7">
    <property type="method" value="X-ray"/>
    <property type="resolution" value="2.89 A"/>
    <property type="chains" value="1q/2q=1-105"/>
</dbReference>
<dbReference type="PDB" id="8FC1">
    <property type="method" value="X-ray"/>
    <property type="resolution" value="2.50 A"/>
    <property type="chains" value="1q/2q=1-105"/>
</dbReference>
<dbReference type="PDB" id="8FC2">
    <property type="method" value="X-ray"/>
    <property type="resolution" value="2.50 A"/>
    <property type="chains" value="1q/2q=1-105"/>
</dbReference>
<dbReference type="PDB" id="8FC3">
    <property type="method" value="X-ray"/>
    <property type="resolution" value="2.60 A"/>
    <property type="chains" value="1q/2q=1-105"/>
</dbReference>
<dbReference type="PDB" id="8FC4">
    <property type="method" value="X-ray"/>
    <property type="resolution" value="2.45 A"/>
    <property type="chains" value="1q/2q=1-105"/>
</dbReference>
<dbReference type="PDB" id="8FC5">
    <property type="method" value="X-ray"/>
    <property type="resolution" value="2.65 A"/>
    <property type="chains" value="1q/2q=1-105"/>
</dbReference>
<dbReference type="PDB" id="8FC6">
    <property type="method" value="X-ray"/>
    <property type="resolution" value="2.35 A"/>
    <property type="chains" value="1q/2q=1-105"/>
</dbReference>
<dbReference type="PDB" id="8FOM">
    <property type="method" value="X-ray"/>
    <property type="resolution" value="3.58 A"/>
    <property type="chains" value="QQ/XQ=1-105"/>
</dbReference>
<dbReference type="PDB" id="8FON">
    <property type="method" value="X-ray"/>
    <property type="resolution" value="3.64 A"/>
    <property type="chains" value="QQ/XQ=1-105"/>
</dbReference>
<dbReference type="PDB" id="8G29">
    <property type="method" value="X-ray"/>
    <property type="resolution" value="2.55 A"/>
    <property type="chains" value="1q/2q=1-105"/>
</dbReference>
<dbReference type="PDB" id="8G2A">
    <property type="method" value="X-ray"/>
    <property type="resolution" value="2.45 A"/>
    <property type="chains" value="1q/2q=1-105"/>
</dbReference>
<dbReference type="PDB" id="8G2B">
    <property type="method" value="X-ray"/>
    <property type="resolution" value="2.55 A"/>
    <property type="chains" value="1q/2q=1-105"/>
</dbReference>
<dbReference type="PDB" id="8G2C">
    <property type="method" value="X-ray"/>
    <property type="resolution" value="2.65 A"/>
    <property type="chains" value="1q/2q=1-105"/>
</dbReference>
<dbReference type="PDB" id="8G2D">
    <property type="method" value="X-ray"/>
    <property type="resolution" value="2.70 A"/>
    <property type="chains" value="1q/2q=1-105"/>
</dbReference>
<dbReference type="PDB" id="8T8B">
    <property type="method" value="X-ray"/>
    <property type="resolution" value="2.65 A"/>
    <property type="chains" value="1q/2q=1-105"/>
</dbReference>
<dbReference type="PDB" id="8T8C">
    <property type="method" value="X-ray"/>
    <property type="resolution" value="2.60 A"/>
    <property type="chains" value="1q/2q=1-105"/>
</dbReference>
<dbReference type="PDB" id="8UD6">
    <property type="method" value="X-ray"/>
    <property type="resolution" value="2.70 A"/>
    <property type="chains" value="1q/2q=1-105"/>
</dbReference>
<dbReference type="PDB" id="8UD7">
    <property type="method" value="X-ray"/>
    <property type="resolution" value="2.55 A"/>
    <property type="chains" value="1q/2q=1-105"/>
</dbReference>
<dbReference type="PDB" id="8UD8">
    <property type="method" value="X-ray"/>
    <property type="resolution" value="2.60 A"/>
    <property type="chains" value="1q/2q=1-105"/>
</dbReference>
<dbReference type="PDB" id="8UVR">
    <property type="method" value="X-ray"/>
    <property type="resolution" value="2.60 A"/>
    <property type="chains" value="1q/2q=1-105"/>
</dbReference>
<dbReference type="PDB" id="8UVS">
    <property type="method" value="X-ray"/>
    <property type="resolution" value="2.75 A"/>
    <property type="chains" value="1q/2q=1-105"/>
</dbReference>
<dbReference type="PDB" id="8VTU">
    <property type="method" value="X-ray"/>
    <property type="resolution" value="2.40 A"/>
    <property type="chains" value="1q/2q=1-105"/>
</dbReference>
<dbReference type="PDB" id="8VTV">
    <property type="method" value="X-ray"/>
    <property type="resolution" value="2.55 A"/>
    <property type="chains" value="1q/2q=1-105"/>
</dbReference>
<dbReference type="PDB" id="8VTW">
    <property type="method" value="X-ray"/>
    <property type="resolution" value="2.35 A"/>
    <property type="chains" value="1q/2q=1-105"/>
</dbReference>
<dbReference type="PDB" id="8VTX">
    <property type="method" value="X-ray"/>
    <property type="resolution" value="2.40 A"/>
    <property type="chains" value="1q/2q=1-105"/>
</dbReference>
<dbReference type="PDB" id="8VTY">
    <property type="method" value="X-ray"/>
    <property type="resolution" value="2.60 A"/>
    <property type="chains" value="1q/2q=1-105"/>
</dbReference>
<dbReference type="PDB" id="9B00">
    <property type="method" value="X-ray"/>
    <property type="resolution" value="2.80 A"/>
    <property type="chains" value="1q/2q=1-105"/>
</dbReference>
<dbReference type="PDB" id="9D0J">
    <property type="method" value="X-ray"/>
    <property type="resolution" value="2.50 A"/>
    <property type="chains" value="1q/2q=1-105"/>
</dbReference>
<dbReference type="PDB" id="9D7R">
    <property type="method" value="X-ray"/>
    <property type="resolution" value="2.70 A"/>
    <property type="chains" value="1q/2q=1-105"/>
</dbReference>
<dbReference type="PDB" id="9D7S">
    <property type="method" value="X-ray"/>
    <property type="resolution" value="2.85 A"/>
    <property type="chains" value="1q/2q=1-105"/>
</dbReference>
<dbReference type="PDB" id="9D7T">
    <property type="method" value="X-ray"/>
    <property type="resolution" value="2.70 A"/>
    <property type="chains" value="1q/2q=1-105"/>
</dbReference>
<dbReference type="PDB" id="9DFC">
    <property type="method" value="X-ray"/>
    <property type="resolution" value="2.50 A"/>
    <property type="chains" value="1q/2q=1-105"/>
</dbReference>
<dbReference type="PDB" id="9DFD">
    <property type="method" value="X-ray"/>
    <property type="resolution" value="2.60 A"/>
    <property type="chains" value="1q/2q=1-105"/>
</dbReference>
<dbReference type="PDB" id="9DFE">
    <property type="method" value="X-ray"/>
    <property type="resolution" value="2.60 A"/>
    <property type="chains" value="1q/2q=1-105"/>
</dbReference>
<dbReference type="PDBsum" id="1FJG"/>
<dbReference type="PDBsum" id="1HNW"/>
<dbReference type="PDBsum" id="1HNX"/>
<dbReference type="PDBsum" id="1HNZ"/>
<dbReference type="PDBsum" id="1HR0"/>
<dbReference type="PDBsum" id="1I94"/>
<dbReference type="PDBsum" id="1I95"/>
<dbReference type="PDBsum" id="1I96"/>
<dbReference type="PDBsum" id="1I97"/>
<dbReference type="PDBsum" id="1IBK"/>
<dbReference type="PDBsum" id="1IBL"/>
<dbReference type="PDBsum" id="1IBM"/>
<dbReference type="PDBsum" id="1J5E"/>
<dbReference type="PDBsum" id="1JGO"/>
<dbReference type="PDBsum" id="1JGP"/>
<dbReference type="PDBsum" id="1JGQ"/>
<dbReference type="PDBsum" id="1ML5"/>
<dbReference type="PDBsum" id="1N32"/>
<dbReference type="PDBsum" id="1N33"/>
<dbReference type="PDBsum" id="1N34"/>
<dbReference type="PDBsum" id="1N36"/>
<dbReference type="PDBsum" id="1VVJ"/>
<dbReference type="PDBsum" id="1VY4"/>
<dbReference type="PDBsum" id="1VY5"/>
<dbReference type="PDBsum" id="1VY6"/>
<dbReference type="PDBsum" id="1VY7"/>
<dbReference type="PDBsum" id="1XMO"/>
<dbReference type="PDBsum" id="1XMQ"/>
<dbReference type="PDBsum" id="1XNQ"/>
<dbReference type="PDBsum" id="1XNR"/>
<dbReference type="PDBsum" id="2E5L"/>
<dbReference type="PDBsum" id="2F4V"/>
<dbReference type="PDBsum" id="2HHH"/>
<dbReference type="PDBsum" id="2UU9"/>
<dbReference type="PDBsum" id="2UUA"/>
<dbReference type="PDBsum" id="2UUB"/>
<dbReference type="PDBsum" id="2UUC"/>
<dbReference type="PDBsum" id="2UXB"/>
<dbReference type="PDBsum" id="2UXC"/>
<dbReference type="PDBsum" id="2UXD"/>
<dbReference type="PDBsum" id="2ZM6"/>
<dbReference type="PDBsum" id="3OTO"/>
<dbReference type="PDBsum" id="3T1H"/>
<dbReference type="PDBsum" id="3T1Y"/>
<dbReference type="PDBsum" id="4AQY"/>
<dbReference type="PDBsum" id="4B3M"/>
<dbReference type="PDBsum" id="4B3R"/>
<dbReference type="PDBsum" id="4B3S"/>
<dbReference type="PDBsum" id="4B3T"/>
<dbReference type="PDBsum" id="4DR1"/>
<dbReference type="PDBsum" id="4DR2"/>
<dbReference type="PDBsum" id="4DR3"/>
<dbReference type="PDBsum" id="4DR4"/>
<dbReference type="PDBsum" id="4DR5"/>
<dbReference type="PDBsum" id="4DR6"/>
<dbReference type="PDBsum" id="4DR7"/>
<dbReference type="PDBsum" id="4DUY"/>
<dbReference type="PDBsum" id="4DUZ"/>
<dbReference type="PDBsum" id="4DV0"/>
<dbReference type="PDBsum" id="4DV1"/>
<dbReference type="PDBsum" id="4DV2"/>
<dbReference type="PDBsum" id="4DV3"/>
<dbReference type="PDBsum" id="4DV4"/>
<dbReference type="PDBsum" id="4DV5"/>
<dbReference type="PDBsum" id="4DV6"/>
<dbReference type="PDBsum" id="4DV7"/>
<dbReference type="PDBsum" id="4GKJ"/>
<dbReference type="PDBsum" id="4GKK"/>
<dbReference type="PDBsum" id="4JI0"/>
<dbReference type="PDBsum" id="4JI1"/>
<dbReference type="PDBsum" id="4JI2"/>
<dbReference type="PDBsum" id="4JI3"/>
<dbReference type="PDBsum" id="4JI4"/>
<dbReference type="PDBsum" id="4JI5"/>
<dbReference type="PDBsum" id="4JI6"/>
<dbReference type="PDBsum" id="4JI7"/>
<dbReference type="PDBsum" id="4JI8"/>
<dbReference type="PDBsum" id="4JV5"/>
<dbReference type="PDBsum" id="4JYA"/>
<dbReference type="PDBsum" id="4K0K"/>
<dbReference type="PDBsum" id="4KHP"/>
<dbReference type="PDBsum" id="4L47"/>
<dbReference type="PDBsum" id="4L71"/>
<dbReference type="PDBsum" id="4LEL"/>
<dbReference type="PDBsum" id="4LF4"/>
<dbReference type="PDBsum" id="4LF5"/>
<dbReference type="PDBsum" id="4LF6"/>
<dbReference type="PDBsum" id="4LF7"/>
<dbReference type="PDBsum" id="4LF8"/>
<dbReference type="PDBsum" id="4LF9"/>
<dbReference type="PDBsum" id="4LFA"/>
<dbReference type="PDBsum" id="4LFB"/>
<dbReference type="PDBsum" id="4LFC"/>
<dbReference type="PDBsum" id="4LFZ"/>
<dbReference type="PDBsum" id="4LNT"/>
<dbReference type="PDBsum" id="4LSK"/>
<dbReference type="PDBsum" id="4LT8"/>
<dbReference type="PDBsum" id="4NXM"/>
<dbReference type="PDBsum" id="4NXN"/>
<dbReference type="PDBsum" id="4OX9"/>
<dbReference type="PDBsum" id="4P6F"/>
<dbReference type="PDBsum" id="4P70"/>
<dbReference type="PDBsum" id="4TUA"/>
<dbReference type="PDBsum" id="4TUB"/>
<dbReference type="PDBsum" id="4TUC"/>
<dbReference type="PDBsum" id="4TUD"/>
<dbReference type="PDBsum" id="4TUE"/>
<dbReference type="PDBsum" id="4V42"/>
<dbReference type="PDBsum" id="4V49"/>
<dbReference type="PDBsum" id="4V4G"/>
<dbReference type="PDBsum" id="4V4I"/>
<dbReference type="PDBsum" id="4V4P"/>
<dbReference type="PDBsum" id="4V4R"/>
<dbReference type="PDBsum" id="4V4S"/>
<dbReference type="PDBsum" id="4V4T"/>
<dbReference type="PDBsum" id="4V4X"/>
<dbReference type="PDBsum" id="4V4Y"/>
<dbReference type="PDBsum" id="4V4Z"/>
<dbReference type="PDBsum" id="4V51"/>
<dbReference type="PDBsum" id="4V5A"/>
<dbReference type="PDBsum" id="4V5C"/>
<dbReference type="PDBsum" id="4V5D"/>
<dbReference type="PDBsum" id="4V5E"/>
<dbReference type="PDBsum" id="4V5F"/>
<dbReference type="PDBsum" id="4V5G"/>
<dbReference type="PDBsum" id="4V5J"/>
<dbReference type="PDBsum" id="4V5K"/>
<dbReference type="PDBsum" id="4V5L"/>
<dbReference type="PDBsum" id="4V5M"/>
<dbReference type="PDBsum" id="4V5N"/>
<dbReference type="PDBsum" id="4V5P"/>
<dbReference type="PDBsum" id="4V5Q"/>
<dbReference type="PDBsum" id="4V5R"/>
<dbReference type="PDBsum" id="4V5S"/>
<dbReference type="PDBsum" id="4V68"/>
<dbReference type="PDBsum" id="4V6A"/>
<dbReference type="PDBsum" id="4V6F"/>
<dbReference type="PDBsum" id="4V6G"/>
<dbReference type="PDBsum" id="4V7J"/>
<dbReference type="PDBsum" id="4V7K"/>
<dbReference type="PDBsum" id="4V7L"/>
<dbReference type="PDBsum" id="4V7M"/>
<dbReference type="PDBsum" id="4V7W"/>
<dbReference type="PDBsum" id="4V7X"/>
<dbReference type="PDBsum" id="4V7Y"/>
<dbReference type="PDBsum" id="4V7Z"/>
<dbReference type="PDBsum" id="4V87"/>
<dbReference type="PDBsum" id="4V8A"/>
<dbReference type="PDBsum" id="4V8B"/>
<dbReference type="PDBsum" id="4V8C"/>
<dbReference type="PDBsum" id="4V8D"/>
<dbReference type="PDBsum" id="4V8E"/>
<dbReference type="PDBsum" id="4V8F"/>
<dbReference type="PDBsum" id="4V8G"/>
<dbReference type="PDBsum" id="4V8H"/>
<dbReference type="PDBsum" id="4V8I"/>
<dbReference type="PDBsum" id="4V8J"/>
<dbReference type="PDBsum" id="4V8N"/>
<dbReference type="PDBsum" id="4V8O"/>
<dbReference type="PDBsum" id="4V8Q"/>
<dbReference type="PDBsum" id="4V8U"/>
<dbReference type="PDBsum" id="4V8X"/>
<dbReference type="PDBsum" id="4V90"/>
<dbReference type="PDBsum" id="4V95"/>
<dbReference type="PDBsum" id="4V97"/>
<dbReference type="PDBsum" id="4V9A"/>
<dbReference type="PDBsum" id="4V9B"/>
<dbReference type="PDBsum" id="4V9H"/>
<dbReference type="PDBsum" id="4V9I"/>
<dbReference type="PDBsum" id="4V9R"/>
<dbReference type="PDBsum" id="4V9S"/>
<dbReference type="PDBsum" id="4W2E"/>
<dbReference type="PDBsum" id="4W2F"/>
<dbReference type="PDBsum" id="4W2G"/>
<dbReference type="PDBsum" id="4W2H"/>
<dbReference type="PDBsum" id="4W2I"/>
<dbReference type="PDBsum" id="4W4G"/>
<dbReference type="PDBsum" id="4WPO"/>
<dbReference type="PDBsum" id="4WQ1"/>
<dbReference type="PDBsum" id="4WQF"/>
<dbReference type="PDBsum" id="4WQR"/>
<dbReference type="PDBsum" id="4WQU"/>
<dbReference type="PDBsum" id="4WQY"/>
<dbReference type="PDBsum" id="4WR6"/>
<dbReference type="PDBsum" id="4WRA"/>
<dbReference type="PDBsum" id="4WRO"/>
<dbReference type="PDBsum" id="4WSD"/>
<dbReference type="PDBsum" id="4WSM"/>
<dbReference type="PDBsum" id="4WT1"/>
<dbReference type="PDBsum" id="4WT8"/>
<dbReference type="PDBsum" id="4WU1"/>
<dbReference type="PDBsum" id="4WZD"/>
<dbReference type="PDBsum" id="4WZO"/>
<dbReference type="PDBsum" id="4X62"/>
<dbReference type="PDBsum" id="4X64"/>
<dbReference type="PDBsum" id="4X65"/>
<dbReference type="PDBsum" id="4X66"/>
<dbReference type="PDBsum" id="4Y4O"/>
<dbReference type="PDBsum" id="4Y4P"/>
<dbReference type="PDBsum" id="4YHH"/>
<dbReference type="PDBsum" id="4YPB"/>
<dbReference type="PDBsum" id="4YY3"/>
<dbReference type="PDBsum" id="4YZV"/>
<dbReference type="PDBsum" id="4Z3S"/>
<dbReference type="PDBsum" id="4Z8C"/>
<dbReference type="PDBsum" id="4ZER"/>
<dbReference type="PDBsum" id="4ZSN"/>
<dbReference type="PDBsum" id="5A9Z"/>
<dbReference type="PDBsum" id="5AA0"/>
<dbReference type="PDBsum" id="5BR8"/>
<dbReference type="PDBsum" id="5CZP"/>
<dbReference type="PDBsum" id="5D8B"/>
<dbReference type="PDBsum" id="5DFE"/>
<dbReference type="PDBsum" id="5DOX"/>
<dbReference type="PDBsum" id="5DOY"/>
<dbReference type="PDBsum" id="5E7K"/>
<dbReference type="PDBsum" id="5E81"/>
<dbReference type="PDBsum" id="5EL4"/>
<dbReference type="PDBsum" id="5EL5"/>
<dbReference type="PDBsum" id="5EL6"/>
<dbReference type="PDBsum" id="5EL7"/>
<dbReference type="PDBsum" id="5F8K"/>
<dbReference type="PDBsum" id="5FDU"/>
<dbReference type="PDBsum" id="5FDV"/>
<dbReference type="PDBsum" id="5HAU"/>
<dbReference type="PDBsum" id="5HCP"/>
<dbReference type="PDBsum" id="5HCQ"/>
<dbReference type="PDBsum" id="5HCR"/>
<dbReference type="PDBsum" id="5HD1"/>
<dbReference type="PDBsum" id="5IB7"/>
<dbReference type="PDBsum" id="5IB8"/>
<dbReference type="PDBsum" id="5IBB"/>
<dbReference type="PDBsum" id="5IWA"/>
<dbReference type="PDBsum" id="5J30"/>
<dbReference type="PDBsum" id="5J3C"/>
<dbReference type="PDBsum" id="5J4B"/>
<dbReference type="PDBsum" id="5J4C"/>
<dbReference type="PDBsum" id="5J8B"/>
<dbReference type="PDBsum" id="5LMN"/>
<dbReference type="PDBsum" id="5LMO"/>
<dbReference type="PDBsum" id="5LMP"/>
<dbReference type="PDBsum" id="5LMQ"/>
<dbReference type="PDBsum" id="5LMR"/>
<dbReference type="PDBsum" id="5LMS"/>
<dbReference type="PDBsum" id="5LMT"/>
<dbReference type="PDBsum" id="5LMU"/>
<dbReference type="PDBsum" id="5LMV"/>
<dbReference type="PDBsum" id="5NDJ"/>
<dbReference type="PDBsum" id="5NDK"/>
<dbReference type="PDBsum" id="5OT7"/>
<dbReference type="PDBsum" id="5UQ7"/>
<dbReference type="PDBsum" id="5UQ8"/>
<dbReference type="PDBsum" id="5VP2"/>
<dbReference type="PDBsum" id="5VPO"/>
<dbReference type="PDBsum" id="5VPP"/>
<dbReference type="PDBsum" id="5W4K"/>
<dbReference type="PDBsum" id="5WIS"/>
<dbReference type="PDBsum" id="5WIT"/>
<dbReference type="PDBsum" id="5WNP"/>
<dbReference type="PDBsum" id="5WNQ"/>
<dbReference type="PDBsum" id="5WNR"/>
<dbReference type="PDBsum" id="5WNS"/>
<dbReference type="PDBsum" id="5WNT"/>
<dbReference type="PDBsum" id="5WNU"/>
<dbReference type="PDBsum" id="5WNV"/>
<dbReference type="PDBsum" id="5ZLU"/>
<dbReference type="PDBsum" id="6BUW"/>
<dbReference type="PDBsum" id="6BZ6"/>
<dbReference type="PDBsum" id="6BZ7"/>
<dbReference type="PDBsum" id="6BZ8"/>
<dbReference type="PDBsum" id="6C5L"/>
<dbReference type="PDBsum" id="6CAE"/>
<dbReference type="PDBsum" id="6CAO"/>
<dbReference type="PDBsum" id="6CAP"/>
<dbReference type="PDBsum" id="6CAQ"/>
<dbReference type="PDBsum" id="6CAR"/>
<dbReference type="PDBsum" id="6CAS"/>
<dbReference type="PDBsum" id="6CFJ"/>
<dbReference type="PDBsum" id="6CFK"/>
<dbReference type="PDBsum" id="6CFL"/>
<dbReference type="PDBsum" id="6CZR"/>
<dbReference type="PDBsum" id="6DTI"/>
<dbReference type="PDBsum" id="6FKR"/>
<dbReference type="PDBsum" id="6GSJ"/>
<dbReference type="PDBsum" id="6GSK"/>
<dbReference type="PDBsum" id="6GSL"/>
<dbReference type="PDBsum" id="6GZQ"/>
<dbReference type="PDBsum" id="6GZX"/>
<dbReference type="PDBsum" id="6GZZ"/>
<dbReference type="PDBsum" id="6MKN"/>
<dbReference type="PDBsum" id="6MPF"/>
<dbReference type="PDBsum" id="6MPI"/>
<dbReference type="PDBsum" id="6N9E"/>
<dbReference type="PDBsum" id="6N9F"/>
<dbReference type="PDBsum" id="6ND5"/>
<dbReference type="PDBsum" id="6ND6"/>
<dbReference type="PDBsum" id="6NDK"/>
<dbReference type="PDBsum" id="6NSH"/>
<dbReference type="PDBsum" id="6NTA"/>
<dbReference type="PDBsum" id="6NUO"/>
<dbReference type="PDBsum" id="6NWY"/>
<dbReference type="PDBsum" id="6NY6"/>
<dbReference type="PDBsum" id="6O3M"/>
<dbReference type="PDBsum" id="6O97"/>
<dbReference type="PDBsum" id="6OF1"/>
<dbReference type="PDBsum" id="6OF6"/>
<dbReference type="PDBsum" id="6OJ2"/>
<dbReference type="PDBsum" id="6OPE"/>
<dbReference type="PDBsum" id="6ORD"/>
<dbReference type="PDBsum" id="6OSI"/>
<dbReference type="PDBsum" id="6OTR"/>
<dbReference type="PDBsum" id="6OXA"/>
<dbReference type="PDBsum" id="6OXI"/>
<dbReference type="PDBsum" id="6Q95"/>
<dbReference type="PDBsum" id="6QNQ"/>
<dbReference type="PDBsum" id="6QNR"/>
<dbReference type="PDBsum" id="6UCQ"/>
<dbReference type="PDBsum" id="6UO1"/>
<dbReference type="PDBsum" id="6XHV"/>
<dbReference type="PDBsum" id="6XHW"/>
<dbReference type="PDBsum" id="6XHX"/>
<dbReference type="PDBsum" id="6XHY"/>
<dbReference type="PDBsum" id="6XQD"/>
<dbReference type="PDBsum" id="6XQE"/>
<dbReference type="PDBsum" id="7AZO"/>
<dbReference type="PDBsum" id="7AZS"/>
<dbReference type="PDBsum" id="7DUG"/>
<dbReference type="PDBsum" id="7DUH"/>
<dbReference type="PDBsum" id="7DUI"/>
<dbReference type="PDBsum" id="7DUJ"/>
<dbReference type="PDBsum" id="7DUK"/>
<dbReference type="PDBsum" id="7DUL"/>
<dbReference type="PDBsum" id="7JQL"/>
<dbReference type="PDBsum" id="7JQM"/>
<dbReference type="PDBsum" id="7LH5"/>
<dbReference type="PDBsum" id="7MD7"/>
<dbReference type="PDBsum" id="7RQ8"/>
<dbReference type="PDBsum" id="7RQ9"/>
<dbReference type="PDBsum" id="7RQA"/>
<dbReference type="PDBsum" id="7RQB"/>
<dbReference type="PDBsum" id="7RQC"/>
<dbReference type="PDBsum" id="7RQD"/>
<dbReference type="PDBsum" id="7RQE"/>
<dbReference type="PDBsum" id="7U2H"/>
<dbReference type="PDBsum" id="7U2I"/>
<dbReference type="PDBsum" id="7U2J"/>
<dbReference type="PDBsum" id="7V2L"/>
<dbReference type="PDBsum" id="7V2M"/>
<dbReference type="PDBsum" id="7V2N"/>
<dbReference type="PDBsum" id="7V2O"/>
<dbReference type="PDBsum" id="7V2P"/>
<dbReference type="PDBsum" id="7V2Q"/>
<dbReference type="PDBsum" id="8CVJ"/>
<dbReference type="PDBsum" id="8CVK"/>
<dbReference type="PDBsum" id="8CVL"/>
<dbReference type="PDBsum" id="8EKB"/>
<dbReference type="PDBsum" id="8EV6"/>
<dbReference type="PDBsum" id="8EV7"/>
<dbReference type="PDBsum" id="8FC1"/>
<dbReference type="PDBsum" id="8FC2"/>
<dbReference type="PDBsum" id="8FC3"/>
<dbReference type="PDBsum" id="8FC4"/>
<dbReference type="PDBsum" id="8FC5"/>
<dbReference type="PDBsum" id="8FC6"/>
<dbReference type="PDBsum" id="8FOM"/>
<dbReference type="PDBsum" id="8FON"/>
<dbReference type="PDBsum" id="8G29"/>
<dbReference type="PDBsum" id="8G2A"/>
<dbReference type="PDBsum" id="8G2B"/>
<dbReference type="PDBsum" id="8G2C"/>
<dbReference type="PDBsum" id="8G2D"/>
<dbReference type="PDBsum" id="8T8B"/>
<dbReference type="PDBsum" id="8T8C"/>
<dbReference type="PDBsum" id="8UD6"/>
<dbReference type="PDBsum" id="8UD7"/>
<dbReference type="PDBsum" id="8UD8"/>
<dbReference type="PDBsum" id="8UVR"/>
<dbReference type="PDBsum" id="8UVS"/>
<dbReference type="PDBsum" id="8VTU"/>
<dbReference type="PDBsum" id="8VTV"/>
<dbReference type="PDBsum" id="8VTW"/>
<dbReference type="PDBsum" id="8VTX"/>
<dbReference type="PDBsum" id="8VTY"/>
<dbReference type="PDBsum" id="9B00"/>
<dbReference type="PDBsum" id="9D0J"/>
<dbReference type="PDBsum" id="9D7R"/>
<dbReference type="PDBsum" id="9D7S"/>
<dbReference type="PDBsum" id="9D7T"/>
<dbReference type="PDBsum" id="9DFC"/>
<dbReference type="PDBsum" id="9DFD"/>
<dbReference type="PDBsum" id="9DFE"/>
<dbReference type="EMDB" id="EMD-0101"/>
<dbReference type="EMDB" id="EMD-0104"/>
<dbReference type="EMDB" id="EMD-0105"/>
<dbReference type="EMDB" id="EMD-31655"/>
<dbReference type="EMDB" id="EMD-31656"/>
<dbReference type="EMDB" id="EMD-31657"/>
<dbReference type="EMDB" id="EMD-31658"/>
<dbReference type="EMDB" id="EMD-31659"/>
<dbReference type="EMDB" id="EMD-31660"/>
<dbReference type="EMDB" id="EMD-3852"/>
<dbReference type="EMDB" id="EMD-4077"/>
<dbReference type="EMDB" id="EMD-4475"/>
<dbReference type="EMDB" id="EMD-6934"/>
<dbReference type="SMR" id="P0DOY7"/>
<dbReference type="IntAct" id="P0DOY7">
    <property type="interactions" value="8"/>
</dbReference>
<dbReference type="DrugBank" id="DB08185">
    <property type="generic name" value="2-METHYLTHIO-N6-ISOPENTENYL-ADENOSINE-5'-MONOPHOSPHATE"/>
</dbReference>
<dbReference type="EnsemblBacteria" id="BAD71506">
    <property type="protein sequence ID" value="BAD71506"/>
    <property type="gene ID" value="BAD71506"/>
</dbReference>
<dbReference type="GeneID" id="3169831"/>
<dbReference type="KEGG" id="ttj:TTHA1683"/>
<dbReference type="eggNOG" id="COG0186">
    <property type="taxonomic scope" value="Bacteria"/>
</dbReference>
<dbReference type="HOGENOM" id="CLU_073626_1_1_0"/>
<dbReference type="EvolutionaryTrace" id="P0DOY7"/>
<dbReference type="Proteomes" id="UP000000532">
    <property type="component" value="Chromosome"/>
</dbReference>
<dbReference type="GO" id="GO:0022627">
    <property type="term" value="C:cytosolic small ribosomal subunit"/>
    <property type="evidence" value="ECO:0007669"/>
    <property type="project" value="TreeGrafter"/>
</dbReference>
<dbReference type="GO" id="GO:0019843">
    <property type="term" value="F:rRNA binding"/>
    <property type="evidence" value="ECO:0007669"/>
    <property type="project" value="UniProtKB-UniRule"/>
</dbReference>
<dbReference type="GO" id="GO:0003735">
    <property type="term" value="F:structural constituent of ribosome"/>
    <property type="evidence" value="ECO:0007669"/>
    <property type="project" value="InterPro"/>
</dbReference>
<dbReference type="GO" id="GO:0006412">
    <property type="term" value="P:translation"/>
    <property type="evidence" value="ECO:0007669"/>
    <property type="project" value="UniProtKB-UniRule"/>
</dbReference>
<dbReference type="CDD" id="cd00364">
    <property type="entry name" value="Ribosomal_uS17"/>
    <property type="match status" value="1"/>
</dbReference>
<dbReference type="Gene3D" id="2.40.50.140">
    <property type="entry name" value="Nucleic acid-binding proteins"/>
    <property type="match status" value="1"/>
</dbReference>
<dbReference type="HAMAP" id="MF_01345_B">
    <property type="entry name" value="Ribosomal_uS17_B"/>
    <property type="match status" value="1"/>
</dbReference>
<dbReference type="InterPro" id="IPR012340">
    <property type="entry name" value="NA-bd_OB-fold"/>
</dbReference>
<dbReference type="InterPro" id="IPR000266">
    <property type="entry name" value="Ribosomal_uS17"/>
</dbReference>
<dbReference type="InterPro" id="IPR019984">
    <property type="entry name" value="Ribosomal_uS17_bact/chlr"/>
</dbReference>
<dbReference type="InterPro" id="IPR019979">
    <property type="entry name" value="Ribosomal_uS17_CS"/>
</dbReference>
<dbReference type="NCBIfam" id="NF004123">
    <property type="entry name" value="PRK05610.1"/>
    <property type="match status" value="1"/>
</dbReference>
<dbReference type="NCBIfam" id="TIGR03635">
    <property type="entry name" value="uS17_bact"/>
    <property type="match status" value="1"/>
</dbReference>
<dbReference type="PANTHER" id="PTHR10744">
    <property type="entry name" value="40S RIBOSOMAL PROTEIN S11 FAMILY MEMBER"/>
    <property type="match status" value="1"/>
</dbReference>
<dbReference type="PANTHER" id="PTHR10744:SF1">
    <property type="entry name" value="SMALL RIBOSOMAL SUBUNIT PROTEIN US17M"/>
    <property type="match status" value="1"/>
</dbReference>
<dbReference type="Pfam" id="PF00366">
    <property type="entry name" value="Ribosomal_S17"/>
    <property type="match status" value="1"/>
</dbReference>
<dbReference type="PRINTS" id="PR00973">
    <property type="entry name" value="RIBOSOMALS17"/>
</dbReference>
<dbReference type="SUPFAM" id="SSF50249">
    <property type="entry name" value="Nucleic acid-binding proteins"/>
    <property type="match status" value="1"/>
</dbReference>
<dbReference type="PROSITE" id="PS00056">
    <property type="entry name" value="RIBOSOMAL_S17"/>
    <property type="match status" value="1"/>
</dbReference>
<protein>
    <recommendedName>
        <fullName evidence="1">Small ribosomal subunit protein uS17</fullName>
    </recommendedName>
    <alternativeName>
        <fullName evidence="5">30S ribosomal protein S17</fullName>
    </alternativeName>
</protein>
<keyword id="KW-0002">3D-structure</keyword>
<keyword id="KW-0903">Direct protein sequencing</keyword>
<keyword id="KW-1185">Reference proteome</keyword>
<keyword id="KW-0687">Ribonucleoprotein</keyword>
<keyword id="KW-0689">Ribosomal protein</keyword>
<keyword id="KW-0694">RNA-binding</keyword>
<keyword id="KW-0699">rRNA-binding</keyword>